<comment type="function">
    <text evidence="2 17 19 24 27 43 50">Receptor-regulated SMAD (R-SMAD) that is an intracellular signal transducer and transcriptional modulator activated by TGF-beta (transforming growth factor) and activin type 1 receptor kinases. Binds the TRE element in the promoter region of many genes that are regulated by TGF-beta and, on formation of the SMAD2/SMAD4 complex, activates transcription. Promotes TGFB1-mediated transcription of odontoblastic differentiation genes in dental papilla cells (By similarity). Positively regulates PDPK1 kinase activity by stimulating its dissociation from the 14-3-3 protein YWHAQ which acts as a negative regulator. May act as a tumor suppressor in colorectal carcinoma (PubMed:8752209).</text>
</comment>
<comment type="subunit">
    <text evidence="2 6 7 8 9 10 13 14 15 16 17 18 19 22 23 24 25 26 27 28 30 31 32 35 36 37 44 47 48 49 50 54">Monomer; in the absence of TGF-beta (PubMed:9670020). Heterodimer; in the presence of TGF-beta (PubMed:9670020). Forms a heterodimer with co-SMAD, SMAD4, in the nucleus to form the transactivation complex SMAD2/SMAD4 (PubMed:15350224, PubMed:24324267, PubMed:9670020). Found in a complex with SMAD3 and TRIM33 upon addition of TGF-beta (PubMed:16751102). Identified in a complex that contains at least ZNF451, SMAD2, SMAD3 and SMAD4 (PubMed:24324267). Interacts (via the MH2 domain) with ZFYVE9; may form trimers with the SMAD4 co-SMAD (PubMed:10615055). Interacts with TAZ/WWRT1 (PubMed:18568018). Interacts with FOXH1 (PubMed:9702198). Interacts with SNW1 (PubMed:11278756). Interacts with CREB-binding protein (CBP) and EP300 (PubMed:16862174). Interacts with SNON (PubMed:11389444). Interacts with ALK4/ACVR1B (PubMed:10615055, PubMed:9892009). Interacts with SKOR1 (PubMed:17292623). Interacts with SKOR2 (PubMed:16200078). Interacts with PRDM16 (PubMed:19049980). Interacts (via MH2 domain) with LEMD3 (PubMed:15601644, PubMed:15647271). Interacts with RBPMS (PubMed:17099224). Interacts with WWP1. Interacts (dephosphorylated form, via the MH1 and MH2 domains) with RANBP3 (via its C-terminal R domain); the interaction results in the export of dephosphorylated SMAD3 out of the nucleus and termination of the TGF-beta signaling (PubMed:19289081). Interacts with PDPK1 (via PH domain) (PubMed:17327236). Interacts with DAB2; the interactions are enhanced upon TGF-beta stimulation (PubMed:11387212). Interacts with USP15 (PubMed:21947082). Interacts with PPP5C (PubMed:22781750). Interacts with LDLRAD4 (via the SMAD interaction motif) (PubMed:24627487). Interacts (via MH2 domain) with PMEPA1 (via the SMAD interaction motif) (PubMed:20129061). Interacts with ZFHX3 (PubMed:25105025). Interacts with ZNF451 (PubMed:24324267). Interacts with SMURF2 when phosphorylated on Ser-465/467 (PubMed:11389444). Interacts with PPM1A (PubMed:16751101). Interacts with TGF-beta (PubMed:8980228). Interacts with TGFBR1 (PubMed:9865696). Interacts with TGIF (PubMed:10835638). Interacts with SMAD3 and TRIM33 (PubMed:16751102). Interacts with ZNF580 (PubMed:21599657). Interacts with NEDD4L in response to TGF-beta (By similarity). Interacts with HGS (By similarity). Interacts with AIP1 (By similarity). Interacts with WWP1 (By similarity). Interacts with PML (By similarity). Interacts weakly with ZNF8 (By similarity). Interacts (when phosphorylated) with RNF111; RNF111 acts as an enhancer of the transcriptional responses by mediating ubiquitination and degradation of SMAD2 inhibitors (By similarity). Interacts with YAP1 (when phosphorylated at 'Ser-127') (By similarity). Interacts when phosphorylated with IPO7; the interaction facilitates translocation of SMAD2 to the nucleus (By similarity). Interacts with MTMR4; negatively regulates TGF-beta signaling through SMAD2 dephosphorylation and retention in endosomes (Probable).</text>
</comment>
<comment type="interaction">
    <interactant intactId="EBI-1040141">
        <id>Q15796</id>
    </interactant>
    <interactant intactId="EBI-2691178">
        <id>Q12955</id>
        <label>ANK3</label>
    </interactant>
    <organismsDiffer>false</organismsDiffer>
    <experiments>2</experiments>
</comment>
<comment type="interaction">
    <interactant intactId="EBI-1040141">
        <id>Q15796</id>
    </interactant>
    <interactant intactId="EBI-712619">
        <id>P05060</id>
        <label>CHGB</label>
    </interactant>
    <organismsDiffer>false</organismsDiffer>
    <experiments>2</experiments>
</comment>
<comment type="interaction">
    <interactant intactId="EBI-1040141">
        <id>Q15796</id>
    </interactant>
    <interactant intactId="EBI-81249">
        <id>O15111</id>
        <label>CHUK</label>
    </interactant>
    <organismsDiffer>false</organismsDiffer>
    <experiments>2</experiments>
</comment>
<comment type="interaction">
    <interactant intactId="EBI-1040141">
        <id>Q15796</id>
    </interactant>
    <interactant intactId="EBI-1171238">
        <id>P98082</id>
        <label>DAB2</label>
    </interactant>
    <organismsDiffer>false</organismsDiffer>
    <experiments>4</experiments>
</comment>
<comment type="interaction">
    <interactant intactId="EBI-1040141">
        <id>Q15796</id>
    </interactant>
    <interactant intactId="EBI-2695893">
        <id>Q9BZ29</id>
        <label>DOCK9</label>
    </interactant>
    <organismsDiffer>false</organismsDiffer>
    <experiments>3</experiments>
</comment>
<comment type="interaction">
    <interactant intactId="EBI-1040141">
        <id>Q15796</id>
    </interactant>
    <interactant intactId="EBI-1759806">
        <id>O75593</id>
        <label>FOXH1</label>
    </interactant>
    <organismsDiffer>false</organismsDiffer>
    <experiments>4</experiments>
</comment>
<comment type="interaction">
    <interactant intactId="EBI-1040141">
        <id>Q15796</id>
    </interactant>
    <interactant intactId="EBI-852823">
        <id>P05412</id>
        <label>JUN</label>
    </interactant>
    <organismsDiffer>false</organismsDiffer>
    <experiments>3</experiments>
</comment>
<comment type="interaction">
    <interactant intactId="EBI-1040141">
        <id>Q15796</id>
    </interactant>
    <interactant intactId="EBI-1052346">
        <id>Q9NYA4</id>
        <label>MTMR4</label>
    </interactant>
    <organismsDiffer>false</organismsDiffer>
    <experiments>2</experiments>
</comment>
<comment type="interaction">
    <interactant intactId="EBI-1040141">
        <id>Q15796</id>
    </interactant>
    <interactant intactId="EBI-1105035">
        <id>P07197</id>
        <label>NEFM</label>
    </interactant>
    <organismsDiffer>false</organismsDiffer>
    <experiments>3</experiments>
</comment>
<comment type="interaction">
    <interactant intactId="EBI-1040141">
        <id>Q15796</id>
    </interactant>
    <interactant intactId="EBI-3867416">
        <id>Q8TAK6</id>
        <label>OLIG1</label>
    </interactant>
    <organismsDiffer>false</organismsDiffer>
    <experiments>2</experiments>
</comment>
<comment type="interaction">
    <interactant intactId="EBI-1040141">
        <id>Q15796</id>
    </interactant>
    <interactant intactId="EBI-989143">
        <id>P35813</id>
        <label>PPM1A</label>
    </interactant>
    <organismsDiffer>false</organismsDiffer>
    <experiments>2</experiments>
</comment>
<comment type="interaction">
    <interactant intactId="EBI-1040141">
        <id>Q15796</id>
    </interactant>
    <interactant intactId="EBI-992681">
        <id>Q9H6Z4</id>
        <label>RANBP3</label>
    </interactant>
    <organismsDiffer>false</organismsDiffer>
    <experiments>2</experiments>
</comment>
<comment type="interaction">
    <interactant intactId="EBI-1040141">
        <id>Q15796</id>
    </interactant>
    <interactant intactId="EBI-446668">
        <id>P61586</id>
        <label>RHOA</label>
    </interactant>
    <organismsDiffer>false</organismsDiffer>
    <experiments>2</experiments>
</comment>
<comment type="interaction">
    <interactant intactId="EBI-1040141">
        <id>Q15796</id>
    </interactant>
    <interactant intactId="EBI-347281">
        <id>P12755</id>
        <label>SKI</label>
    </interactant>
    <organismsDiffer>false</organismsDiffer>
    <experiments>11</experiments>
</comment>
<comment type="interaction">
    <interactant intactId="EBI-1040141">
        <id>Q15796</id>
    </interactant>
    <interactant intactId="EBI-2902468">
        <id>P12757</id>
        <label>SKIL</label>
    </interactant>
    <organismsDiffer>false</organismsDiffer>
    <experiments>3</experiments>
</comment>
<comment type="interaction">
    <interactant intactId="EBI-1040141">
        <id>Q15796</id>
    </interactant>
    <interactant intactId="EBI-1040141">
        <id>Q15796</id>
        <label>SMAD2</label>
    </interactant>
    <organismsDiffer>false</organismsDiffer>
    <experiments>2</experiments>
</comment>
<comment type="interaction">
    <interactant intactId="EBI-1040141">
        <id>Q15796</id>
    </interactant>
    <interactant intactId="EBI-347161">
        <id>P84022</id>
        <label>SMAD3</label>
    </interactant>
    <organismsDiffer>false</organismsDiffer>
    <experiments>3</experiments>
</comment>
<comment type="interaction">
    <interactant intactId="EBI-1040141">
        <id>Q15796</id>
    </interactant>
    <interactant intactId="EBI-347263">
        <id>Q13485</id>
        <label>SMAD4</label>
    </interactant>
    <organismsDiffer>false</organismsDiffer>
    <experiments>24</experiments>
</comment>
<comment type="interaction">
    <interactant intactId="EBI-1040141">
        <id>Q15796</id>
    </interactant>
    <interactant intactId="EBI-396727">
        <id>Q9HAU4</id>
        <label>SMURF2</label>
    </interactant>
    <organismsDiffer>false</organismsDiffer>
    <experiments>6</experiments>
</comment>
<comment type="interaction">
    <interactant intactId="EBI-1040141">
        <id>Q15796</id>
    </interactant>
    <interactant intactId="EBI-632715">
        <id>Q13573</id>
        <label>SNW1</label>
    </interactant>
    <organismsDiffer>false</organismsDiffer>
    <experiments>3</experiments>
</comment>
<comment type="interaction">
    <interactant intactId="EBI-1040141">
        <id>Q15796</id>
    </interactant>
    <interactant intactId="EBI-366083">
        <id>P04637</id>
        <label>TP53</label>
    </interactant>
    <organismsDiffer>false</organismsDiffer>
    <experiments>7</experiments>
</comment>
<comment type="interaction">
    <interactant intactId="EBI-1040141">
        <id>Q15796</id>
    </interactant>
    <interactant intactId="EBI-2337775">
        <id>Q9H3D4</id>
        <label>TP63</label>
    </interactant>
    <organismsDiffer>false</organismsDiffer>
    <experiments>3</experiments>
</comment>
<comment type="interaction">
    <interactant intactId="EBI-1040141">
        <id>Q15796</id>
    </interactant>
    <interactant intactId="EBI-2214398">
        <id>Q9UPN9</id>
        <label>TRIM33</label>
    </interactant>
    <organismsDiffer>false</organismsDiffer>
    <experiments>6</experiments>
</comment>
<comment type="interaction">
    <interactant intactId="EBI-1040141">
        <id>Q15796</id>
    </interactant>
    <interactant intactId="EBI-743923">
        <id>O00308</id>
        <label>WWP2</label>
    </interactant>
    <organismsDiffer>false</organismsDiffer>
    <experiments>4</experiments>
</comment>
<comment type="interaction">
    <interactant intactId="EBI-1040141">
        <id>Q15796</id>
    </interactant>
    <interactant intactId="EBI-2513582">
        <id>Q96KR1</id>
        <label>ZFR</label>
    </interactant>
    <organismsDiffer>false</organismsDiffer>
    <experiments>2</experiments>
</comment>
<comment type="interaction">
    <interactant intactId="EBI-1040141">
        <id>Q15796</id>
    </interactant>
    <interactant intactId="EBI-296817">
        <id>O95405</id>
        <label>ZFYVE9</label>
    </interactant>
    <organismsDiffer>false</organismsDiffer>
    <experiments>8</experiments>
</comment>
<comment type="interaction">
    <interactant intactId="EBI-1040141">
        <id>Q15796</id>
    </interactant>
    <interactant intactId="EBI-9969973">
        <id>P70056</id>
        <label>foxh1</label>
    </interactant>
    <organismsDiffer>true</organismsDiffer>
    <experiments>4</experiments>
</comment>
<comment type="subcellular location">
    <subcellularLocation>
        <location evidence="17 27 29 49">Cytoplasm</location>
    </subcellularLocation>
    <subcellularLocation>
        <location evidence="17 27 29 30 32 49">Nucleus</location>
    </subcellularLocation>
    <text evidence="2 17 27 29 49">Cytoplasmic and nuclear in the absence of TGF-beta. On TGF-beta stimulation, migrates to the nucleus when complexed with SMAD4 or with IPO7 (PubMed:21145499, PubMed:9865696). On dephosphorylation by phosphatase PPM1A, released from the SMAD2/SMAD4 complex, and exported out of the nucleus by interaction with RANBP1 (PubMed:16751101, PubMed:19289081). Localized mainly to the nucleus in the early stages of embryo development with expression becoming evident in the cytoplasm at the blastocyst and epiblast stages (By similarity).</text>
</comment>
<comment type="alternative products">
    <event type="alternative splicing"/>
    <isoform>
        <id>Q15796-1</id>
        <name>Long</name>
        <sequence type="displayed"/>
    </isoform>
    <isoform>
        <id>Q15796-2</id>
        <name>Short</name>
        <name>Smad2Deltaexon3</name>
        <sequence type="described" ref="VSP_006178"/>
    </isoform>
</comment>
<comment type="tissue specificity">
    <text evidence="30">Expressed at high levels in skeletal muscle, endothelial cells, heart and placenta.</text>
</comment>
<comment type="PTM">
    <text evidence="11 12 24 33 43 44 45 46">Phosphorylated on one or several of Thr-220, Ser-245, Ser-250, and Ser-255. In response to TGF-beta, phosphorylated on Ser-465/467 by TGF-beta and activin type 1 receptor kinases. TGF-beta-induced Ser-465/467 phosphorylation declines progressively in a KMT5A-dependent manner. Able to interact with SMURF2 when phosphorylated on Ser-465/467, recruiting other proteins, such as SNON, for degradation. In response to decorin, the naturally occurring inhibitor of TGF-beta signaling, phosphorylated on Ser-240 by CaMK2. Phosphorylated by MAPK3 upon EGF stimulation; which increases transcriptional activity and stability, and is blocked by calmodulin. Phosphorylated by PDPK1.</text>
</comment>
<comment type="PTM">
    <text evidence="2 31">In response to TGF-beta, ubiquitinated by NEDD4L; which promotes its degradation. Monoubiquitinated, leading to prevent DNA-binding (By similarity). Deubiquitination by USP15 alleviates inhibition and promotes activation of TGF-beta target genes (PubMed:21947082). Ubiquitinated by RNF111, leading to its degradation: only SMAD2 proteins that are 'in use' are targeted by RNF111, RNF111 playing a key role in activating SMAD2 and regulating its turnover (By similarity).</text>
</comment>
<comment type="PTM">
    <text evidence="19 21 51">Acetylated on Lys-19 by coactivators in response to TGF-beta signaling, which increases transcriptional activity. Isoform short: Acetylation increases DNA binding activity in vitro and enhances its association with target promoters in vivo. Acetylation in the nucleus by EP300 is enhanced by TGF-beta.</text>
</comment>
<comment type="disease" evidence="34 38 41">
    <disease id="DI-06292">
        <name>Congenital heart defects, multiple types, 8, with or without heterotaxy</name>
        <acronym>CHTD8</acronym>
        <description>An autosomal dominant disorder characterized by congenital developmental abnormalities involving structures of the heart. Common CHTD8 features include double-outlet right ventricle, unbalanced complete atrioventricular canal, and valvular anomalies. Vascular anomalies include dextroposition of the great arteries, anomalous pulmonary venous return, and superior vena cava to left atrium defect. Patients may also exhibit laterality defects, including dextrocardia, atrial isomerism, dextrogastria, left-sided gallbladder, and intestinal malrotation.</description>
        <dbReference type="MIM" id="619657"/>
    </disease>
    <text>The disease is caused by variants affecting the gene represented in this entry.</text>
</comment>
<comment type="disease" evidence="38 39 40 41">
    <disease id="DI-06280">
        <name>Loeys-Dietz syndrome 6</name>
        <acronym>LDS6</acronym>
        <description>A form of Loeys-Dietz syndrome, a syndrome with widespread systemic involvement characterized by arterial tortuosity and aneurysms, hypertelorism, and bifid uvula or cleft palate. Most LDS6 patients have thoracic aortic aneurysm involving the ascending aorta and/or aortic root, but cerebral and iliac arteries can be affected, and abdominal aortic aneurysm has been observed. Arterial tortuosity involving cerebral vessels, the aorta, and/or iliac arteries has also been reported. LDS6 inheritance is autosomal dominant.</description>
        <dbReference type="MIM" id="619656"/>
    </disease>
    <text>The disease is caused by variants affecting the gene represented in this entry.</text>
</comment>
<comment type="similarity">
    <text evidence="52">Belongs to the dwarfin/SMAD family.</text>
</comment>
<comment type="online information" name="Atlas of Genetics and Cytogenetics in Oncology and Haematology">
    <link uri="https://atlasgeneticsoncology.org/gene/370/SMAD2"/>
</comment>
<proteinExistence type="evidence at protein level"/>
<sequence>MSSILPFTPPVVKRLLGWKKSAGGSGGAGGGEQNGQEEKWCEKAVKSLVKKLKKTGRLDELEKAITTQNCNTKCVTIPSTCSEIWGLSTPNTIDQWDTTGLYSFSEQTRSLDGRLQVSHRKGLPHVIYCRLWRWPDLHSHHELKAIENCEYAFNLKKDEVCVNPYHYQRVETPVLPPVLVPRHTEILTELPPLDDYTHSIPENTNFPAGIEPQSNYIPETPPPGYISEDGETSDQQLNQSMDTGSPAELSPTTLSPVNHSLDLQPVTYSEPAFWCSIAYYELNQRVGETFHASQPSLTVDGFTDPSNSERFCLGLLSNVNRNATVEMTRRHIGRGVRLYYIGGEVFAECLSDSAIFVQSPNCNQRYGWHPATVCKIPPGCNLKIFNNQEFAALLAQSVNQGFEAVYQLTRMCTIRMSFVKGWGAEYRRQTVTSTPCWIELHLNGPLQWLDKVLTQMGSPSVRCSSMS</sequence>
<evidence type="ECO:0000250" key="1"/>
<evidence type="ECO:0000250" key="2">
    <source>
        <dbReference type="UniProtKB" id="Q62432"/>
    </source>
</evidence>
<evidence type="ECO:0000255" key="3">
    <source>
        <dbReference type="PROSITE-ProRule" id="PRU00438"/>
    </source>
</evidence>
<evidence type="ECO:0000255" key="4">
    <source>
        <dbReference type="PROSITE-ProRule" id="PRU00439"/>
    </source>
</evidence>
<evidence type="ECO:0000256" key="5">
    <source>
        <dbReference type="SAM" id="MobiDB-lite"/>
    </source>
</evidence>
<evidence type="ECO:0000269" key="6">
    <source>
    </source>
</evidence>
<evidence type="ECO:0000269" key="7">
    <source>
    </source>
</evidence>
<evidence type="ECO:0000269" key="8">
    <source>
    </source>
</evidence>
<evidence type="ECO:0000269" key="9">
    <source>
    </source>
</evidence>
<evidence type="ECO:0000269" key="10">
    <source>
    </source>
</evidence>
<evidence type="ECO:0000269" key="11">
    <source>
    </source>
</evidence>
<evidence type="ECO:0000269" key="12">
    <source>
    </source>
</evidence>
<evidence type="ECO:0000269" key="13">
    <source>
    </source>
</evidence>
<evidence type="ECO:0000269" key="14">
    <source>
    </source>
</evidence>
<evidence type="ECO:0000269" key="15">
    <source>
    </source>
</evidence>
<evidence type="ECO:0000269" key="16">
    <source>
    </source>
</evidence>
<evidence type="ECO:0000269" key="17">
    <source>
    </source>
</evidence>
<evidence type="ECO:0000269" key="18">
    <source>
    </source>
</evidence>
<evidence type="ECO:0000269" key="19">
    <source>
    </source>
</evidence>
<evidence type="ECO:0000269" key="20">
    <source>
    </source>
</evidence>
<evidence type="ECO:0000269" key="21">
    <source>
    </source>
</evidence>
<evidence type="ECO:0000269" key="22">
    <source>
    </source>
</evidence>
<evidence type="ECO:0000269" key="23">
    <source>
    </source>
</evidence>
<evidence type="ECO:0000269" key="24">
    <source>
    </source>
</evidence>
<evidence type="ECO:0000269" key="25">
    <source>
    </source>
</evidence>
<evidence type="ECO:0000269" key="26">
    <source>
    </source>
</evidence>
<evidence type="ECO:0000269" key="27">
    <source>
    </source>
</evidence>
<evidence type="ECO:0000269" key="28">
    <source>
    </source>
</evidence>
<evidence type="ECO:0000269" key="29">
    <source>
    </source>
</evidence>
<evidence type="ECO:0000269" key="30">
    <source>
    </source>
</evidence>
<evidence type="ECO:0000269" key="31">
    <source>
    </source>
</evidence>
<evidence type="ECO:0000269" key="32">
    <source>
    </source>
</evidence>
<evidence type="ECO:0000269" key="33">
    <source>
    </source>
</evidence>
<evidence type="ECO:0000269" key="34">
    <source>
    </source>
</evidence>
<evidence type="ECO:0000269" key="35">
    <source>
    </source>
</evidence>
<evidence type="ECO:0000269" key="36">
    <source>
    </source>
</evidence>
<evidence type="ECO:0000269" key="37">
    <source>
    </source>
</evidence>
<evidence type="ECO:0000269" key="38">
    <source>
    </source>
</evidence>
<evidence type="ECO:0000269" key="39">
    <source>
    </source>
</evidence>
<evidence type="ECO:0000269" key="40">
    <source>
    </source>
</evidence>
<evidence type="ECO:0000269" key="41">
    <source>
    </source>
</evidence>
<evidence type="ECO:0000269" key="42">
    <source>
    </source>
</evidence>
<evidence type="ECO:0000269" key="43">
    <source>
    </source>
</evidence>
<evidence type="ECO:0000269" key="44">
    <source>
    </source>
</evidence>
<evidence type="ECO:0000269" key="45">
    <source>
    </source>
</evidence>
<evidence type="ECO:0000269" key="46">
    <source>
    </source>
</evidence>
<evidence type="ECO:0000269" key="47">
    <source>
    </source>
</evidence>
<evidence type="ECO:0000269" key="48">
    <source>
    </source>
</evidence>
<evidence type="ECO:0000269" key="49">
    <source>
    </source>
</evidence>
<evidence type="ECO:0000269" key="50">
    <source>
    </source>
</evidence>
<evidence type="ECO:0000269" key="51">
    <source ref="7"/>
</evidence>
<evidence type="ECO:0000305" key="52"/>
<evidence type="ECO:0000305" key="53">
    <source>
    </source>
</evidence>
<evidence type="ECO:0000305" key="54">
    <source>
    </source>
</evidence>
<evidence type="ECO:0007744" key="55">
    <source>
    </source>
</evidence>
<evidence type="ECO:0007744" key="56">
    <source>
    </source>
</evidence>
<evidence type="ECO:0007744" key="57">
    <source>
    </source>
</evidence>
<evidence type="ECO:0007744" key="58">
    <source>
    </source>
</evidence>
<evidence type="ECO:0007744" key="59">
    <source>
    </source>
</evidence>
<evidence type="ECO:0007744" key="60">
    <source>
    </source>
</evidence>
<evidence type="ECO:0007744" key="61">
    <source>
    </source>
</evidence>
<evidence type="ECO:0007829" key="62">
    <source>
        <dbReference type="PDB" id="1DEV"/>
    </source>
</evidence>
<evidence type="ECO:0007829" key="63">
    <source>
        <dbReference type="PDB" id="1KHX"/>
    </source>
</evidence>
<evidence type="ECO:0007829" key="64">
    <source>
        <dbReference type="PDB" id="1U7V"/>
    </source>
</evidence>
<evidence type="ECO:0007829" key="65">
    <source>
        <dbReference type="PDB" id="6M64"/>
    </source>
</evidence>
<feature type="initiator methionine" description="Removed" evidence="51 57 58 59 60">
    <location>
        <position position="1"/>
    </location>
</feature>
<feature type="chain" id="PRO_0000090852" description="Mothers against decapentaplegic homolog 2">
    <location>
        <begin position="2"/>
        <end position="467"/>
    </location>
</feature>
<feature type="domain" description="MH1" evidence="3">
    <location>
        <begin position="10"/>
        <end position="176"/>
    </location>
</feature>
<feature type="domain" description="MH2" evidence="4">
    <location>
        <begin position="274"/>
        <end position="467"/>
    </location>
</feature>
<feature type="region of interest" description="Disordered" evidence="5">
    <location>
        <begin position="207"/>
        <end position="251"/>
    </location>
</feature>
<feature type="short sequence motif" description="PY-motif">
    <location>
        <begin position="221"/>
        <end position="225"/>
    </location>
</feature>
<feature type="compositionally biased region" description="Polar residues" evidence="5">
    <location>
        <begin position="207"/>
        <end position="217"/>
    </location>
</feature>
<feature type="compositionally biased region" description="Polar residues" evidence="5">
    <location>
        <begin position="233"/>
        <end position="243"/>
    </location>
</feature>
<feature type="binding site" evidence="1">
    <location>
        <position position="74"/>
    </location>
    <ligand>
        <name>Zn(2+)</name>
        <dbReference type="ChEBI" id="CHEBI:29105"/>
    </ligand>
</feature>
<feature type="binding site" evidence="1">
    <location>
        <position position="149"/>
    </location>
    <ligand>
        <name>Zn(2+)</name>
        <dbReference type="ChEBI" id="CHEBI:29105"/>
    </ligand>
</feature>
<feature type="binding site" evidence="1">
    <location>
        <position position="161"/>
    </location>
    <ligand>
        <name>Zn(2+)</name>
        <dbReference type="ChEBI" id="CHEBI:29105"/>
    </ligand>
</feature>
<feature type="binding site" evidence="1">
    <location>
        <position position="166"/>
    </location>
    <ligand>
        <name>Zn(2+)</name>
        <dbReference type="ChEBI" id="CHEBI:29105"/>
    </ligand>
</feature>
<feature type="modified residue" description="N-acetylserine" evidence="51 57 58 59 60">
    <location>
        <position position="2"/>
    </location>
</feature>
<feature type="modified residue" description="Phosphothreonine; by MAPK3" evidence="12 56 58 61">
    <location>
        <position position="8"/>
    </location>
</feature>
<feature type="modified residue" description="N6-acetyllysine" evidence="21">
    <location>
        <position position="19"/>
    </location>
</feature>
<feature type="modified residue" description="Phosphothreonine" evidence="53">
    <location>
        <position position="220"/>
    </location>
</feature>
<feature type="modified residue" description="Phosphoserine; by CAMK2" evidence="4 11">
    <location>
        <position position="240"/>
    </location>
</feature>
<feature type="modified residue" description="Phosphoserine" evidence="53">
    <location>
        <position position="245"/>
    </location>
</feature>
<feature type="modified residue" description="Phosphoserine" evidence="53">
    <location>
        <position position="250"/>
    </location>
</feature>
<feature type="modified residue" description="Phosphoserine" evidence="53">
    <location>
        <position position="255"/>
    </location>
</feature>
<feature type="modified residue" description="Phosphoserine" evidence="55 58 61">
    <location>
        <position position="458"/>
    </location>
</feature>
<feature type="modified residue" description="Phosphoserine" evidence="58">
    <location>
        <position position="460"/>
    </location>
</feature>
<feature type="modified residue" description="Phosphoserine" evidence="4 44">
    <location>
        <position position="464"/>
    </location>
</feature>
<feature type="modified residue" description="Phosphoserine; by TGFBR1" evidence="4 33 44 45 46">
    <location>
        <position position="465"/>
    </location>
</feature>
<feature type="modified residue" description="Phosphoserine; by TGFBR1" evidence="4 33 44 45 46">
    <location>
        <position position="467"/>
    </location>
</feature>
<feature type="splice variant" id="VSP_006178" description="In isoform Short." evidence="52">
    <location>
        <begin position="79"/>
        <end position="108"/>
    </location>
</feature>
<feature type="sequence variant" id="VAR_011375" description="In a colorectal carcinoma sample." evidence="43">
    <original>R</original>
    <variation>C</variation>
    <location>
        <position position="133"/>
    </location>
</feature>
<feature type="sequence variant" id="VAR_086573" description="In CHTD8." evidence="41">
    <location>
        <begin position="159"/>
        <end position="467"/>
    </location>
</feature>
<feature type="sequence variant" id="VAR_086574" description="In CHTD8." evidence="34">
    <original>W</original>
    <variation>C</variation>
    <location>
        <position position="274"/>
    </location>
</feature>
<feature type="sequence variant" id="VAR_086575" description="In LDS6; uncertain significance." evidence="39">
    <original>A</original>
    <variation>V</variation>
    <location>
        <position position="278"/>
    </location>
</feature>
<feature type="sequence variant" id="VAR_036473" description="In a colorectal cancer sample; somatic mutation." evidence="20">
    <original>D</original>
    <variation>V</variation>
    <location>
        <position position="300"/>
    </location>
</feature>
<feature type="sequence variant" id="VAR_086576" description="In CHTD8." evidence="41">
    <original>C</original>
    <variation>S</variation>
    <location>
        <position position="312"/>
    </location>
</feature>
<feature type="sequence variant" id="VAR_086577" description="Found in a patient with Marfan syndrome-like phenotype; uncertain significance." evidence="40">
    <original>N</original>
    <variation>K</variation>
    <location>
        <position position="318"/>
    </location>
</feature>
<feature type="sequence variant" id="VAR_011376" description="In a colorectal carcinoma sample." evidence="42">
    <location>
        <begin position="344"/>
        <end position="358"/>
    </location>
</feature>
<feature type="sequence variant" id="VAR_086578" description="In LDS6; uncertain significance." evidence="40">
    <original>N</original>
    <variation>T</variation>
    <location>
        <position position="361"/>
    </location>
</feature>
<feature type="sequence variant" id="VAR_086579" description="In LDS6; uncertain significance." evidence="38">
    <original>Q</original>
    <variation>R</variation>
    <location>
        <position position="388"/>
    </location>
</feature>
<feature type="sequence variant" id="VAR_086580" description="In LDS6; uncertain significance." evidence="40">
    <original>S</original>
    <variation>Y</variation>
    <location>
        <position position="397"/>
    </location>
</feature>
<feature type="sequence variant" id="VAR_011377" description="In a colorectal carcinoma sample." evidence="43">
    <original>L</original>
    <variation>R</variation>
    <location>
        <position position="440"/>
    </location>
</feature>
<feature type="sequence variant" id="VAR_011378" description="In a colorectal carcinoma sample." evidence="43">
    <original>P</original>
    <variation>H</variation>
    <location>
        <position position="445"/>
    </location>
</feature>
<feature type="sequence variant" id="VAR_086581" description="In LDS6; uncertain significance." evidence="38">
    <original>L</original>
    <variation>S</variation>
    <location>
        <position position="449"/>
    </location>
</feature>
<feature type="sequence variant" id="VAR_011379" description="In a colorectal carcinoma sample." evidence="43">
    <original>D</original>
    <variation>E</variation>
    <location>
        <position position="450"/>
    </location>
</feature>
<feature type="sequence variant" id="VAR_086582" description="In LDS6." evidence="38">
    <original>G</original>
    <variation>R</variation>
    <location>
        <position position="457"/>
    </location>
</feature>
<feature type="sequence variant" id="VAR_086583" description="Found in a patient suspected to suffer from Marfan syndrome; uncertain significance." evidence="40">
    <original>S</original>
    <variation>L</variation>
    <location>
        <position position="467"/>
    </location>
</feature>
<feature type="mutagenesis site" description="Loss of acetylation." evidence="21">
    <original>K</original>
    <variation>R</variation>
    <location>
        <position position="19"/>
    </location>
</feature>
<feature type="mutagenesis site" description="No effect on acetylation." evidence="21">
    <original>K</original>
    <variation>R</variation>
    <location>
        <position position="20"/>
    </location>
</feature>
<feature type="mutagenesis site" description="Loss of binding to SMURF2." evidence="10">
    <location>
        <begin position="221"/>
        <end position="225"/>
    </location>
</feature>
<feature type="mutagenesis site" description="Loss of interaction with PMEPA1." evidence="28">
    <original>W</original>
    <variation>A</variation>
    <location>
        <position position="368"/>
    </location>
</feature>
<feature type="mutagenesis site" description="Loss of binding to SARA." evidence="6">
    <original>N</original>
    <variation>S</variation>
    <location>
        <position position="381"/>
    </location>
</feature>
<feature type="mutagenesis site" description="Increased binding to PPM1A." evidence="17">
    <original>V</original>
    <variation>R</variation>
    <location>
        <position position="398"/>
    </location>
</feature>
<feature type="mutagenesis site" description="Loss of phosphorylation by TGFBR1; when associated with A-465 and A-467." evidence="44">
    <original>S</original>
    <variation>A</variation>
    <location>
        <position position="464"/>
    </location>
</feature>
<feature type="mutagenesis site" description="Binds RANBP3." evidence="27">
    <original>SMS</original>
    <variation>AMA</variation>
    <location>
        <begin position="465"/>
        <end position="467"/>
    </location>
</feature>
<feature type="mutagenesis site" description="Greatly reduced RANBP2 binding." evidence="27">
    <original>SMS</original>
    <variation>DMD</variation>
    <location>
        <begin position="465"/>
        <end position="467"/>
    </location>
</feature>
<feature type="mutagenesis site" description="No change in binding to PPM1A. Loss of phosphorylation by TGFBR1; when associated with A-464 and A-467." evidence="17 44">
    <original>S</original>
    <variation>A</variation>
    <location>
        <position position="465"/>
    </location>
</feature>
<feature type="mutagenesis site" description="No change in binding to PPM1A." evidence="17 44">
    <original>S</original>
    <variation>D</variation>
    <location>
        <position position="465"/>
    </location>
</feature>
<feature type="mutagenesis site" description="No change in binding to PPM1A. Loss of phosphorylation by TGFBR1; when associated with A-464 and A-465." evidence="17 44">
    <original>S</original>
    <variation>A</variation>
    <location>
        <position position="467"/>
    </location>
</feature>
<feature type="mutagenesis site" description="No change in binding to PPM1A." evidence="17 44">
    <original>S</original>
    <variation>D</variation>
    <location>
        <position position="467"/>
    </location>
</feature>
<feature type="strand" evidence="62">
    <location>
        <begin position="264"/>
        <end position="267"/>
    </location>
</feature>
<feature type="strand" evidence="65">
    <location>
        <begin position="272"/>
        <end position="281"/>
    </location>
</feature>
<feature type="strand" evidence="65">
    <location>
        <begin position="290"/>
        <end position="292"/>
    </location>
</feature>
<feature type="strand" evidence="65">
    <location>
        <begin position="294"/>
        <end position="302"/>
    </location>
</feature>
<feature type="strand" evidence="64">
    <location>
        <begin position="305"/>
        <end position="307"/>
    </location>
</feature>
<feature type="strand" evidence="65">
    <location>
        <begin position="310"/>
        <end position="312"/>
    </location>
</feature>
<feature type="helix" evidence="65">
    <location>
        <begin position="313"/>
        <end position="315"/>
    </location>
</feature>
<feature type="helix" evidence="65">
    <location>
        <begin position="323"/>
        <end position="329"/>
    </location>
</feature>
<feature type="turn" evidence="63">
    <location>
        <begin position="330"/>
        <end position="334"/>
    </location>
</feature>
<feature type="strand" evidence="65">
    <location>
        <begin position="336"/>
        <end position="341"/>
    </location>
</feature>
<feature type="strand" evidence="65">
    <location>
        <begin position="344"/>
        <end position="349"/>
    </location>
</feature>
<feature type="strand" evidence="65">
    <location>
        <begin position="351"/>
        <end position="353"/>
    </location>
</feature>
<feature type="strand" evidence="65">
    <location>
        <begin position="355"/>
        <end position="358"/>
    </location>
</feature>
<feature type="helix" evidence="65">
    <location>
        <begin position="360"/>
        <end position="366"/>
    </location>
</feature>
<feature type="strand" evidence="65">
    <location>
        <begin position="374"/>
        <end position="376"/>
    </location>
</feature>
<feature type="strand" evidence="65">
    <location>
        <begin position="381"/>
        <end position="386"/>
    </location>
</feature>
<feature type="helix" evidence="65">
    <location>
        <begin position="387"/>
        <end position="398"/>
    </location>
</feature>
<feature type="helix" evidence="65">
    <location>
        <begin position="402"/>
        <end position="406"/>
    </location>
</feature>
<feature type="helix" evidence="65">
    <location>
        <begin position="407"/>
        <end position="412"/>
    </location>
</feature>
<feature type="strand" evidence="65">
    <location>
        <begin position="413"/>
        <end position="419"/>
    </location>
</feature>
<feature type="strand" evidence="63">
    <location>
        <begin position="423"/>
        <end position="427"/>
    </location>
</feature>
<feature type="helix" evidence="65">
    <location>
        <begin position="431"/>
        <end position="433"/>
    </location>
</feature>
<feature type="strand" evidence="65">
    <location>
        <begin position="434"/>
        <end position="442"/>
    </location>
</feature>
<feature type="helix" evidence="65">
    <location>
        <begin position="443"/>
        <end position="453"/>
    </location>
</feature>
<keyword id="KW-0002">3D-structure</keyword>
<keyword id="KW-0007">Acetylation</keyword>
<keyword id="KW-0025">Alternative splicing</keyword>
<keyword id="KW-0963">Cytoplasm</keyword>
<keyword id="KW-0903">Direct protein sequencing</keyword>
<keyword id="KW-0225">Disease variant</keyword>
<keyword id="KW-0238">DNA-binding</keyword>
<keyword id="KW-1056">Heterotaxy</keyword>
<keyword id="KW-0479">Metal-binding</keyword>
<keyword id="KW-0539">Nucleus</keyword>
<keyword id="KW-0597">Phosphoprotein</keyword>
<keyword id="KW-1267">Proteomics identification</keyword>
<keyword id="KW-1185">Reference proteome</keyword>
<keyword id="KW-0804">Transcription</keyword>
<keyword id="KW-0805">Transcription regulation</keyword>
<keyword id="KW-0832">Ubl conjugation</keyword>
<keyword id="KW-0862">Zinc</keyword>
<protein>
    <recommendedName>
        <fullName>Mothers against decapentaplegic homolog 2</fullName>
        <shortName>MAD homolog 2</shortName>
        <shortName>Mothers against DPP homolog 2</shortName>
    </recommendedName>
    <alternativeName>
        <fullName>JV18-1</fullName>
    </alternativeName>
    <alternativeName>
        <fullName>Mad-related protein 2</fullName>
        <shortName>hMAD-2</shortName>
    </alternativeName>
    <alternativeName>
        <fullName>SMAD family member 2</fullName>
        <shortName>SMAD 2</shortName>
        <shortName>Smad2</shortName>
        <shortName>hSMAD2</shortName>
    </alternativeName>
</protein>
<gene>
    <name type="primary">SMAD2</name>
    <name type="synonym">MADH2</name>
    <name type="synonym">MADR2</name>
</gene>
<name>SMAD2_HUMAN</name>
<organism>
    <name type="scientific">Homo sapiens</name>
    <name type="common">Human</name>
    <dbReference type="NCBI Taxonomy" id="9606"/>
    <lineage>
        <taxon>Eukaryota</taxon>
        <taxon>Metazoa</taxon>
        <taxon>Chordata</taxon>
        <taxon>Craniata</taxon>
        <taxon>Vertebrata</taxon>
        <taxon>Euteleostomi</taxon>
        <taxon>Mammalia</taxon>
        <taxon>Eutheria</taxon>
        <taxon>Euarchontoglires</taxon>
        <taxon>Primates</taxon>
        <taxon>Haplorrhini</taxon>
        <taxon>Catarrhini</taxon>
        <taxon>Hominidae</taxon>
        <taxon>Homo</taxon>
    </lineage>
</organism>
<accession>Q15796</accession>
<dbReference type="EMBL" id="U59911">
    <property type="protein sequence ID" value="AAC50789.1"/>
    <property type="molecule type" value="mRNA"/>
</dbReference>
<dbReference type="EMBL" id="U68018">
    <property type="protein sequence ID" value="AAB17087.1"/>
    <property type="molecule type" value="mRNA"/>
</dbReference>
<dbReference type="EMBL" id="U65019">
    <property type="protein sequence ID" value="AAB17054.1"/>
    <property type="molecule type" value="mRNA"/>
</dbReference>
<dbReference type="EMBL" id="AF027964">
    <property type="protein sequence ID" value="AAC51918.1"/>
    <property type="molecule type" value="mRNA"/>
</dbReference>
<dbReference type="EMBL" id="U78733">
    <property type="protein sequence ID" value="AAC39657.1"/>
    <property type="molecule type" value="Genomic_DNA"/>
</dbReference>
<dbReference type="EMBL" id="U78727">
    <property type="protein sequence ID" value="AAC39657.1"/>
    <property type="status" value="JOINED"/>
    <property type="molecule type" value="Genomic_DNA"/>
</dbReference>
<dbReference type="EMBL" id="U78728">
    <property type="protein sequence ID" value="AAC39657.1"/>
    <property type="status" value="JOINED"/>
    <property type="molecule type" value="Genomic_DNA"/>
</dbReference>
<dbReference type="EMBL" id="U78729">
    <property type="protein sequence ID" value="AAC39657.1"/>
    <property type="status" value="JOINED"/>
    <property type="molecule type" value="Genomic_DNA"/>
</dbReference>
<dbReference type="EMBL" id="U78730">
    <property type="protein sequence ID" value="AAC39657.1"/>
    <property type="status" value="JOINED"/>
    <property type="molecule type" value="Genomic_DNA"/>
</dbReference>
<dbReference type="EMBL" id="U78731">
    <property type="protein sequence ID" value="AAC39657.1"/>
    <property type="status" value="JOINED"/>
    <property type="molecule type" value="Genomic_DNA"/>
</dbReference>
<dbReference type="EMBL" id="U78732">
    <property type="protein sequence ID" value="AAC39657.1"/>
    <property type="status" value="JOINED"/>
    <property type="molecule type" value="Genomic_DNA"/>
</dbReference>
<dbReference type="EMBL" id="BC014840">
    <property type="protein sequence ID" value="AAH14840.1"/>
    <property type="molecule type" value="mRNA"/>
</dbReference>
<dbReference type="EMBL" id="BC025699">
    <property type="protein sequence ID" value="AAH25699.1"/>
    <property type="molecule type" value="mRNA"/>
</dbReference>
<dbReference type="CCDS" id="CCDS11934.1">
    <molecule id="Q15796-1"/>
</dbReference>
<dbReference type="PIR" id="S71797">
    <property type="entry name" value="S71797"/>
</dbReference>
<dbReference type="RefSeq" id="NP_001003652.1">
    <molecule id="Q15796-1"/>
    <property type="nucleotide sequence ID" value="NM_001003652.4"/>
</dbReference>
<dbReference type="RefSeq" id="NP_001129409.1">
    <molecule id="Q15796-2"/>
    <property type="nucleotide sequence ID" value="NM_001135937.3"/>
</dbReference>
<dbReference type="RefSeq" id="NP_005892.1">
    <molecule id="Q15796-1"/>
    <property type="nucleotide sequence ID" value="NM_005901.6"/>
</dbReference>
<dbReference type="RefSeq" id="XP_005258316.1">
    <property type="nucleotide sequence ID" value="XM_005258259.3"/>
</dbReference>
<dbReference type="RefSeq" id="XP_006722514.1">
    <property type="nucleotide sequence ID" value="XM_006722451.3"/>
</dbReference>
<dbReference type="RefSeq" id="XP_016881234.1">
    <property type="nucleotide sequence ID" value="XM_017025745.1"/>
</dbReference>
<dbReference type="RefSeq" id="XP_016881235.1">
    <property type="nucleotide sequence ID" value="XM_017025746.1"/>
</dbReference>
<dbReference type="PDB" id="1DEV">
    <property type="method" value="X-ray"/>
    <property type="resolution" value="2.20 A"/>
    <property type="chains" value="A/C=261-456"/>
</dbReference>
<dbReference type="PDB" id="1KHX">
    <property type="method" value="X-ray"/>
    <property type="resolution" value="1.80 A"/>
    <property type="chains" value="A=241-467"/>
</dbReference>
<dbReference type="PDB" id="1U7V">
    <property type="method" value="X-ray"/>
    <property type="resolution" value="2.70 A"/>
    <property type="chains" value="A/C=270-467"/>
</dbReference>
<dbReference type="PDB" id="2LB3">
    <property type="method" value="NMR"/>
    <property type="chains" value="B=217-224"/>
</dbReference>
<dbReference type="PDB" id="5XOD">
    <property type="method" value="X-ray"/>
    <property type="resolution" value="1.85 A"/>
    <property type="chains" value="A=262-458"/>
</dbReference>
<dbReference type="PDB" id="5ZOJ">
    <property type="method" value="X-ray"/>
    <property type="resolution" value="2.79 A"/>
    <property type="chains" value="A/B/C=262-458"/>
</dbReference>
<dbReference type="PDB" id="6M64">
    <property type="method" value="X-ray"/>
    <property type="resolution" value="1.45 A"/>
    <property type="chains" value="A/C/E=262-464"/>
</dbReference>
<dbReference type="PDB" id="6YIA">
    <property type="method" value="X-ray"/>
    <property type="resolution" value="1.30 A"/>
    <property type="chains" value="P=459-467"/>
</dbReference>
<dbReference type="PDB" id="6ZVQ">
    <property type="method" value="X-ray"/>
    <property type="resolution" value="2.03 A"/>
    <property type="chains" value="A=241-467"/>
</dbReference>
<dbReference type="PDB" id="7CO1">
    <property type="method" value="X-ray"/>
    <property type="resolution" value="3.30 A"/>
    <property type="chains" value="A/C/E=262-467"/>
</dbReference>
<dbReference type="PDBsum" id="1DEV"/>
<dbReference type="PDBsum" id="1KHX"/>
<dbReference type="PDBsum" id="1U7V"/>
<dbReference type="PDBsum" id="2LB3"/>
<dbReference type="PDBsum" id="5XOD"/>
<dbReference type="PDBsum" id="5ZOJ"/>
<dbReference type="PDBsum" id="6M64"/>
<dbReference type="PDBsum" id="6YIA"/>
<dbReference type="PDBsum" id="6ZVQ"/>
<dbReference type="PDBsum" id="7CO1"/>
<dbReference type="BMRB" id="Q15796"/>
<dbReference type="SASBDB" id="Q15796"/>
<dbReference type="SMR" id="Q15796"/>
<dbReference type="BioGRID" id="110262">
    <property type="interactions" value="360"/>
</dbReference>
<dbReference type="ComplexPortal" id="CPX-1">
    <property type="entry name" value="SMAD2-SMAD3-SMAD4 complex"/>
</dbReference>
<dbReference type="ComplexPortal" id="CPX-11">
    <property type="entry name" value="SMAD2 homotrimer"/>
</dbReference>
<dbReference type="ComplexPortal" id="CPX-3208">
    <property type="entry name" value="SMAD2-SMAD4 complex"/>
</dbReference>
<dbReference type="CORUM" id="Q15796"/>
<dbReference type="DIP" id="DIP-29716N"/>
<dbReference type="FunCoup" id="Q15796">
    <property type="interactions" value="4373"/>
</dbReference>
<dbReference type="IntAct" id="Q15796">
    <property type="interactions" value="246"/>
</dbReference>
<dbReference type="MINT" id="Q15796"/>
<dbReference type="STRING" id="9606.ENSP00000262160"/>
<dbReference type="BindingDB" id="Q15796"/>
<dbReference type="ChEMBL" id="CHEMBL2396512"/>
<dbReference type="DrugBank" id="DB04522">
    <property type="generic name" value="Dexfosfoserine"/>
</dbReference>
<dbReference type="GlyGen" id="Q15796">
    <property type="glycosylation" value="2 sites, 1 O-linked glycan (1 site)"/>
</dbReference>
<dbReference type="iPTMnet" id="Q15796"/>
<dbReference type="PhosphoSitePlus" id="Q15796"/>
<dbReference type="SwissPalm" id="Q15796"/>
<dbReference type="BioMuta" id="SMAD2"/>
<dbReference type="DMDM" id="13633914"/>
<dbReference type="jPOST" id="Q15796"/>
<dbReference type="MassIVE" id="Q15796"/>
<dbReference type="PaxDb" id="9606-ENSP00000262160"/>
<dbReference type="PeptideAtlas" id="Q15796"/>
<dbReference type="ProteomicsDB" id="60764">
    <molecule id="Q15796-1"/>
</dbReference>
<dbReference type="ProteomicsDB" id="60765">
    <molecule id="Q15796-2"/>
</dbReference>
<dbReference type="Pumba" id="Q15796"/>
<dbReference type="ABCD" id="Q15796">
    <property type="antibodies" value="1 sequenced antibody"/>
</dbReference>
<dbReference type="Antibodypedia" id="9235">
    <property type="antibodies" value="1971 antibodies from 47 providers"/>
</dbReference>
<dbReference type="DNASU" id="4087"/>
<dbReference type="Ensembl" id="ENST00000262160.11">
    <molecule id="Q15796-1"/>
    <property type="protein sequence ID" value="ENSP00000262160.6"/>
    <property type="gene ID" value="ENSG00000175387.16"/>
</dbReference>
<dbReference type="Ensembl" id="ENST00000356825.8">
    <molecule id="Q15796-2"/>
    <property type="protein sequence ID" value="ENSP00000349282.4"/>
    <property type="gene ID" value="ENSG00000175387.16"/>
</dbReference>
<dbReference type="Ensembl" id="ENST00000402690.6">
    <molecule id="Q15796-1"/>
    <property type="protein sequence ID" value="ENSP00000384449.1"/>
    <property type="gene ID" value="ENSG00000175387.16"/>
</dbReference>
<dbReference type="Ensembl" id="ENST00000586040.5">
    <molecule id="Q15796-2"/>
    <property type="protein sequence ID" value="ENSP00000466193.1"/>
    <property type="gene ID" value="ENSG00000175387.16"/>
</dbReference>
<dbReference type="GeneID" id="4087"/>
<dbReference type="KEGG" id="hsa:4087"/>
<dbReference type="MANE-Select" id="ENST00000262160.11">
    <property type="protein sequence ID" value="ENSP00000262160.6"/>
    <property type="RefSeq nucleotide sequence ID" value="NM_005901.6"/>
    <property type="RefSeq protein sequence ID" value="NP_005892.1"/>
</dbReference>
<dbReference type="UCSC" id="uc010xdc.4">
    <molecule id="Q15796-1"/>
    <property type="organism name" value="human"/>
</dbReference>
<dbReference type="AGR" id="HGNC:6768"/>
<dbReference type="CTD" id="4087"/>
<dbReference type="DisGeNET" id="4087"/>
<dbReference type="GeneCards" id="SMAD2"/>
<dbReference type="GeneReviews" id="SMAD2"/>
<dbReference type="HGNC" id="HGNC:6768">
    <property type="gene designation" value="SMAD2"/>
</dbReference>
<dbReference type="HPA" id="ENSG00000175387">
    <property type="expression patterns" value="Low tissue specificity"/>
</dbReference>
<dbReference type="MalaCards" id="SMAD2"/>
<dbReference type="MIM" id="601366">
    <property type="type" value="gene"/>
</dbReference>
<dbReference type="MIM" id="619656">
    <property type="type" value="phenotype"/>
</dbReference>
<dbReference type="MIM" id="619657">
    <property type="type" value="phenotype"/>
</dbReference>
<dbReference type="neXtProt" id="NX_Q15796"/>
<dbReference type="OpenTargets" id="ENSG00000175387"/>
<dbReference type="Orphanet" id="91387">
    <property type="disease" value="Familial thoracic aortic aneurysm and aortic dissection"/>
</dbReference>
<dbReference type="Orphanet" id="60030">
    <property type="disease" value="Loeys-Dietz syndrome"/>
</dbReference>
<dbReference type="PharmGKB" id="PA134959722"/>
<dbReference type="VEuPathDB" id="HostDB:ENSG00000175387"/>
<dbReference type="eggNOG" id="KOG3701">
    <property type="taxonomic scope" value="Eukaryota"/>
</dbReference>
<dbReference type="GeneTree" id="ENSGT00940000153499"/>
<dbReference type="HOGENOM" id="CLU_026736_0_2_1"/>
<dbReference type="InParanoid" id="Q15796"/>
<dbReference type="OMA" id="PNTRCIT"/>
<dbReference type="OrthoDB" id="5794312at2759"/>
<dbReference type="PAN-GO" id="Q15796">
    <property type="GO annotations" value="10 GO annotations based on evolutionary models"/>
</dbReference>
<dbReference type="PhylomeDB" id="Q15796"/>
<dbReference type="TreeFam" id="TF314923"/>
<dbReference type="PathwayCommons" id="Q15796"/>
<dbReference type="Reactome" id="R-HSA-1181150">
    <property type="pathway name" value="Signaling by NODAL"/>
</dbReference>
<dbReference type="Reactome" id="R-HSA-1502540">
    <property type="pathway name" value="Signaling by Activin"/>
</dbReference>
<dbReference type="Reactome" id="R-HSA-2173788">
    <property type="pathway name" value="Downregulation of TGF-beta receptor signaling"/>
</dbReference>
<dbReference type="Reactome" id="R-HSA-2173789">
    <property type="pathway name" value="TGF-beta receptor signaling activates SMADs"/>
</dbReference>
<dbReference type="Reactome" id="R-HSA-2173795">
    <property type="pathway name" value="Downregulation of SMAD2/3:SMAD4 transcriptional activity"/>
</dbReference>
<dbReference type="Reactome" id="R-HSA-2173796">
    <property type="pathway name" value="SMAD2/SMAD3:SMAD4 heterotrimer regulates transcription"/>
</dbReference>
<dbReference type="Reactome" id="R-HSA-3304356">
    <property type="pathway name" value="SMAD2/3 Phosphorylation Motif Mutants in Cancer"/>
</dbReference>
<dbReference type="Reactome" id="R-HSA-3311021">
    <property type="pathway name" value="SMAD4 MH2 Domain Mutants in Cancer"/>
</dbReference>
<dbReference type="Reactome" id="R-HSA-3315487">
    <property type="pathway name" value="SMAD2/3 MH2 Domain Mutants in Cancer"/>
</dbReference>
<dbReference type="Reactome" id="R-HSA-3656532">
    <property type="pathway name" value="TGFBR1 KD Mutants in Cancer"/>
</dbReference>
<dbReference type="Reactome" id="R-HSA-452723">
    <property type="pathway name" value="Transcriptional regulation of pluripotent stem cells"/>
</dbReference>
<dbReference type="Reactome" id="R-HSA-5689880">
    <property type="pathway name" value="Ub-specific processing proteases"/>
</dbReference>
<dbReference type="Reactome" id="R-HSA-9615017">
    <property type="pathway name" value="FOXO-mediated transcription of oxidative stress, metabolic and neuronal genes"/>
</dbReference>
<dbReference type="Reactome" id="R-HSA-9617828">
    <property type="pathway name" value="FOXO-mediated transcription of cell cycle genes"/>
</dbReference>
<dbReference type="Reactome" id="R-HSA-9754189">
    <property type="pathway name" value="Germ layer formation at gastrulation"/>
</dbReference>
<dbReference type="Reactome" id="R-HSA-9796292">
    <property type="pathway name" value="Formation of axial mesoderm"/>
</dbReference>
<dbReference type="Reactome" id="R-HSA-9823730">
    <property type="pathway name" value="Formation of definitive endoderm"/>
</dbReference>
<dbReference type="SignaLink" id="Q15796"/>
<dbReference type="SIGNOR" id="Q15796"/>
<dbReference type="BioGRID-ORCS" id="4087">
    <property type="hits" value="16 hits in 1189 CRISPR screens"/>
</dbReference>
<dbReference type="ChiTaRS" id="SMAD2">
    <property type="organism name" value="human"/>
</dbReference>
<dbReference type="EvolutionaryTrace" id="Q15796"/>
<dbReference type="GeneWiki" id="Mothers_against_decapentaplegic_homolog_2"/>
<dbReference type="GenomeRNAi" id="4087"/>
<dbReference type="Pharos" id="Q15796">
    <property type="development level" value="Tbio"/>
</dbReference>
<dbReference type="PRO" id="PR:Q15796"/>
<dbReference type="Proteomes" id="UP000005640">
    <property type="component" value="Chromosome 18"/>
</dbReference>
<dbReference type="RNAct" id="Q15796">
    <property type="molecule type" value="protein"/>
</dbReference>
<dbReference type="Bgee" id="ENSG00000175387">
    <property type="expression patterns" value="Expressed in calcaneal tendon and 211 other cell types or tissues"/>
</dbReference>
<dbReference type="ExpressionAtlas" id="Q15796">
    <property type="expression patterns" value="baseline and differential"/>
</dbReference>
<dbReference type="GO" id="GO:0032444">
    <property type="term" value="C:activin responsive factor complex"/>
    <property type="evidence" value="ECO:0000314"/>
    <property type="project" value="BHF-UCL"/>
</dbReference>
<dbReference type="GO" id="GO:0000785">
    <property type="term" value="C:chromatin"/>
    <property type="evidence" value="ECO:0000314"/>
    <property type="project" value="BHF-UCL"/>
</dbReference>
<dbReference type="GO" id="GO:0005737">
    <property type="term" value="C:cytoplasm"/>
    <property type="evidence" value="ECO:0000314"/>
    <property type="project" value="UniProtKB"/>
</dbReference>
<dbReference type="GO" id="GO:0005829">
    <property type="term" value="C:cytosol"/>
    <property type="evidence" value="ECO:0000304"/>
    <property type="project" value="Reactome"/>
</dbReference>
<dbReference type="GO" id="GO:0071144">
    <property type="term" value="C:heteromeric SMAD protein complex"/>
    <property type="evidence" value="ECO:0000314"/>
    <property type="project" value="BHF-UCL"/>
</dbReference>
<dbReference type="GO" id="GO:0071142">
    <property type="term" value="C:homomeric SMAD protein complex"/>
    <property type="evidence" value="ECO:0000353"/>
    <property type="project" value="ComplexPortal"/>
</dbReference>
<dbReference type="GO" id="GO:0043231">
    <property type="term" value="C:intracellular membrane-bounded organelle"/>
    <property type="evidence" value="ECO:0000314"/>
    <property type="project" value="HPA"/>
</dbReference>
<dbReference type="GO" id="GO:0005654">
    <property type="term" value="C:nucleoplasm"/>
    <property type="evidence" value="ECO:0000314"/>
    <property type="project" value="HPA"/>
</dbReference>
<dbReference type="GO" id="GO:0005634">
    <property type="term" value="C:nucleus"/>
    <property type="evidence" value="ECO:0000314"/>
    <property type="project" value="UniProtKB"/>
</dbReference>
<dbReference type="GO" id="GO:0032991">
    <property type="term" value="C:protein-containing complex"/>
    <property type="evidence" value="ECO:0000315"/>
    <property type="project" value="CAFA"/>
</dbReference>
<dbReference type="GO" id="GO:0071141">
    <property type="term" value="C:SMAD protein complex"/>
    <property type="evidence" value="ECO:0000314"/>
    <property type="project" value="UniProtKB"/>
</dbReference>
<dbReference type="GO" id="GO:0005667">
    <property type="term" value="C:transcription regulator complex"/>
    <property type="evidence" value="ECO:0000314"/>
    <property type="project" value="BHF-UCL"/>
</dbReference>
<dbReference type="GO" id="GO:0003682">
    <property type="term" value="F:chromatin binding"/>
    <property type="evidence" value="ECO:0007669"/>
    <property type="project" value="Ensembl"/>
</dbReference>
<dbReference type="GO" id="GO:0000987">
    <property type="term" value="F:cis-regulatory region sequence-specific DNA binding"/>
    <property type="evidence" value="ECO:0000305"/>
    <property type="project" value="BHF-UCL"/>
</dbReference>
<dbReference type="GO" id="GO:0070410">
    <property type="term" value="F:co-SMAD binding"/>
    <property type="evidence" value="ECO:0000353"/>
    <property type="project" value="BHF-UCL"/>
</dbReference>
<dbReference type="GO" id="GO:0097718">
    <property type="term" value="F:disordered domain specific binding"/>
    <property type="evidence" value="ECO:0000353"/>
    <property type="project" value="CAFA"/>
</dbReference>
<dbReference type="GO" id="GO:0001228">
    <property type="term" value="F:DNA-binding transcription activator activity, RNA polymerase II-specific"/>
    <property type="evidence" value="ECO:0000314"/>
    <property type="project" value="BHF-UCL"/>
</dbReference>
<dbReference type="GO" id="GO:0003700">
    <property type="term" value="F:DNA-binding transcription factor activity"/>
    <property type="evidence" value="ECO:0000314"/>
    <property type="project" value="BHF-UCL"/>
</dbReference>
<dbReference type="GO" id="GO:0000981">
    <property type="term" value="F:DNA-binding transcription factor activity, RNA polymerase II-specific"/>
    <property type="evidence" value="ECO:0000247"/>
    <property type="project" value="NTNU_SB"/>
</dbReference>
<dbReference type="GO" id="GO:0140297">
    <property type="term" value="F:DNA-binding transcription factor binding"/>
    <property type="evidence" value="ECO:0000353"/>
    <property type="project" value="UniProtKB"/>
</dbReference>
<dbReference type="GO" id="GO:0003690">
    <property type="term" value="F:double-stranded DNA binding"/>
    <property type="evidence" value="ECO:0000250"/>
    <property type="project" value="UniProtKB"/>
</dbReference>
<dbReference type="GO" id="GO:0070411">
    <property type="term" value="F:I-SMAD binding"/>
    <property type="evidence" value="ECO:0000353"/>
    <property type="project" value="BHF-UCL"/>
</dbReference>
<dbReference type="GO" id="GO:0042802">
    <property type="term" value="F:identical protein binding"/>
    <property type="evidence" value="ECO:0000353"/>
    <property type="project" value="IntAct"/>
</dbReference>
<dbReference type="GO" id="GO:0046872">
    <property type="term" value="F:metal ion binding"/>
    <property type="evidence" value="ECO:0007669"/>
    <property type="project" value="UniProtKB-KW"/>
</dbReference>
<dbReference type="GO" id="GO:0019902">
    <property type="term" value="F:phosphatase binding"/>
    <property type="evidence" value="ECO:0000353"/>
    <property type="project" value="UniProtKB"/>
</dbReference>
<dbReference type="GO" id="GO:0070412">
    <property type="term" value="F:R-SMAD binding"/>
    <property type="evidence" value="ECO:0000353"/>
    <property type="project" value="BHF-UCL"/>
</dbReference>
<dbReference type="GO" id="GO:0000978">
    <property type="term" value="F:RNA polymerase II cis-regulatory region sequence-specific DNA binding"/>
    <property type="evidence" value="ECO:0000314"/>
    <property type="project" value="BHF-UCL"/>
</dbReference>
<dbReference type="GO" id="GO:0061629">
    <property type="term" value="F:RNA polymerase II-specific DNA-binding transcription factor binding"/>
    <property type="evidence" value="ECO:0007669"/>
    <property type="project" value="Ensembl"/>
</dbReference>
<dbReference type="GO" id="GO:0046332">
    <property type="term" value="F:SMAD binding"/>
    <property type="evidence" value="ECO:0000353"/>
    <property type="project" value="UniProtKB"/>
</dbReference>
<dbReference type="GO" id="GO:0048156">
    <property type="term" value="F:tau protein binding"/>
    <property type="evidence" value="ECO:0000250"/>
    <property type="project" value="ARUK-UCL"/>
</dbReference>
<dbReference type="GO" id="GO:0005160">
    <property type="term" value="F:transforming growth factor beta receptor binding"/>
    <property type="evidence" value="ECO:0000353"/>
    <property type="project" value="BHF-UCL"/>
</dbReference>
<dbReference type="GO" id="GO:0034713">
    <property type="term" value="F:type I transforming growth factor beta receptor binding"/>
    <property type="evidence" value="ECO:0000353"/>
    <property type="project" value="BHF-UCL"/>
</dbReference>
<dbReference type="GO" id="GO:0031625">
    <property type="term" value="F:ubiquitin protein ligase binding"/>
    <property type="evidence" value="ECO:0000353"/>
    <property type="project" value="BHF-UCL"/>
</dbReference>
<dbReference type="GO" id="GO:0032924">
    <property type="term" value="P:activin receptor signaling pathway"/>
    <property type="evidence" value="ECO:0000315"/>
    <property type="project" value="BHF-UCL"/>
</dbReference>
<dbReference type="GO" id="GO:0009653">
    <property type="term" value="P:anatomical structure morphogenesis"/>
    <property type="evidence" value="ECO:0000318"/>
    <property type="project" value="GO_Central"/>
</dbReference>
<dbReference type="GO" id="GO:0009952">
    <property type="term" value="P:anterior/posterior pattern specification"/>
    <property type="evidence" value="ECO:0000250"/>
    <property type="project" value="UniProtKB"/>
</dbReference>
<dbReference type="GO" id="GO:0003180">
    <property type="term" value="P:aortic valve morphogenesis"/>
    <property type="evidence" value="ECO:0000250"/>
    <property type="project" value="BHF-UCL"/>
</dbReference>
<dbReference type="GO" id="GO:0030154">
    <property type="term" value="P:cell differentiation"/>
    <property type="evidence" value="ECO:0000318"/>
    <property type="project" value="GO_Central"/>
</dbReference>
<dbReference type="GO" id="GO:0045165">
    <property type="term" value="P:cell fate commitment"/>
    <property type="evidence" value="ECO:0000250"/>
    <property type="project" value="UniProtKB"/>
</dbReference>
<dbReference type="GO" id="GO:0008283">
    <property type="term" value="P:cell population proliferation"/>
    <property type="evidence" value="ECO:0007669"/>
    <property type="project" value="Ensembl"/>
</dbReference>
<dbReference type="GO" id="GO:0003140">
    <property type="term" value="P:determination of left/right asymmetry in lateral mesoderm"/>
    <property type="evidence" value="ECO:0000315"/>
    <property type="project" value="BHF-UCL"/>
</dbReference>
<dbReference type="GO" id="GO:0006351">
    <property type="term" value="P:DNA-templated transcription"/>
    <property type="evidence" value="ECO:0000303"/>
    <property type="project" value="ComplexPortal"/>
</dbReference>
<dbReference type="GO" id="GO:0048701">
    <property type="term" value="P:embryonic cranial skeleton morphogenesis"/>
    <property type="evidence" value="ECO:0007669"/>
    <property type="project" value="Ensembl"/>
</dbReference>
<dbReference type="GO" id="GO:0048617">
    <property type="term" value="P:embryonic foregut morphogenesis"/>
    <property type="evidence" value="ECO:0007669"/>
    <property type="project" value="Ensembl"/>
</dbReference>
<dbReference type="GO" id="GO:0003203">
    <property type="term" value="P:endocardial cushion morphogenesis"/>
    <property type="evidence" value="ECO:0000250"/>
    <property type="project" value="BHF-UCL"/>
</dbReference>
<dbReference type="GO" id="GO:0001706">
    <property type="term" value="P:endoderm formation"/>
    <property type="evidence" value="ECO:0007669"/>
    <property type="project" value="Ensembl"/>
</dbReference>
<dbReference type="GO" id="GO:0007369">
    <property type="term" value="P:gastrulation"/>
    <property type="evidence" value="ECO:0000304"/>
    <property type="project" value="BHF-UCL"/>
</dbReference>
<dbReference type="GO" id="GO:0001701">
    <property type="term" value="P:in utero embryonic development"/>
    <property type="evidence" value="ECO:0007669"/>
    <property type="project" value="Ensembl"/>
</dbReference>
<dbReference type="GO" id="GO:0030073">
    <property type="term" value="P:insulin secretion"/>
    <property type="evidence" value="ECO:0007669"/>
    <property type="project" value="Ensembl"/>
</dbReference>
<dbReference type="GO" id="GO:0035556">
    <property type="term" value="P:intracellular signal transduction"/>
    <property type="evidence" value="ECO:0000250"/>
    <property type="project" value="UniProtKB"/>
</dbReference>
<dbReference type="GO" id="GO:0030324">
    <property type="term" value="P:lung development"/>
    <property type="evidence" value="ECO:0007669"/>
    <property type="project" value="Ensembl"/>
</dbReference>
<dbReference type="GO" id="GO:0001707">
    <property type="term" value="P:mesoderm formation"/>
    <property type="evidence" value="ECO:0000250"/>
    <property type="project" value="UniProtKB"/>
</dbReference>
<dbReference type="GO" id="GO:0045596">
    <property type="term" value="P:negative regulation of cell differentiation"/>
    <property type="evidence" value="ECO:0000250"/>
    <property type="project" value="UniProt"/>
</dbReference>
<dbReference type="GO" id="GO:0045892">
    <property type="term" value="P:negative regulation of DNA-templated transcription"/>
    <property type="evidence" value="ECO:0000315"/>
    <property type="project" value="BHF-UCL"/>
</dbReference>
<dbReference type="GO" id="GO:0030279">
    <property type="term" value="P:negative regulation of ossification"/>
    <property type="evidence" value="ECO:0000314"/>
    <property type="project" value="UniProt"/>
</dbReference>
<dbReference type="GO" id="GO:0038092">
    <property type="term" value="P:nodal signaling pathway"/>
    <property type="evidence" value="ECO:0000315"/>
    <property type="project" value="BHF-UCL"/>
</dbReference>
<dbReference type="GO" id="GO:0071895">
    <property type="term" value="P:odontoblast differentiation"/>
    <property type="evidence" value="ECO:0000250"/>
    <property type="project" value="UniProtKB"/>
</dbReference>
<dbReference type="GO" id="GO:0035265">
    <property type="term" value="P:organ growth"/>
    <property type="evidence" value="ECO:0007669"/>
    <property type="project" value="Ensembl"/>
</dbReference>
<dbReference type="GO" id="GO:0031016">
    <property type="term" value="P:pancreas development"/>
    <property type="evidence" value="ECO:0007669"/>
    <property type="project" value="Ensembl"/>
</dbReference>
<dbReference type="GO" id="GO:0048340">
    <property type="term" value="P:paraxial mesoderm morphogenesis"/>
    <property type="evidence" value="ECO:0000250"/>
    <property type="project" value="UniProtKB"/>
</dbReference>
<dbReference type="GO" id="GO:0060039">
    <property type="term" value="P:pericardium development"/>
    <property type="evidence" value="ECO:0007669"/>
    <property type="project" value="Ensembl"/>
</dbReference>
<dbReference type="GO" id="GO:0030513">
    <property type="term" value="P:positive regulation of BMP signaling pathway"/>
    <property type="evidence" value="ECO:0000315"/>
    <property type="project" value="BHF-UCL"/>
</dbReference>
<dbReference type="GO" id="GO:0045893">
    <property type="term" value="P:positive regulation of DNA-templated transcription"/>
    <property type="evidence" value="ECO:0000314"/>
    <property type="project" value="BHF-UCL"/>
</dbReference>
<dbReference type="GO" id="GO:0010718">
    <property type="term" value="P:positive regulation of epithelial to mesenchymal transition"/>
    <property type="evidence" value="ECO:0000250"/>
    <property type="project" value="BHF-UCL"/>
</dbReference>
<dbReference type="GO" id="GO:0010628">
    <property type="term" value="P:positive regulation of gene expression"/>
    <property type="evidence" value="ECO:0007669"/>
    <property type="project" value="Ensembl"/>
</dbReference>
<dbReference type="GO" id="GO:0045944">
    <property type="term" value="P:positive regulation of transcription by RNA polymerase II"/>
    <property type="evidence" value="ECO:0000314"/>
    <property type="project" value="NTNU_SB"/>
</dbReference>
<dbReference type="GO" id="GO:0009791">
    <property type="term" value="P:post-embryonic development"/>
    <property type="evidence" value="ECO:0007669"/>
    <property type="project" value="Ensembl"/>
</dbReference>
<dbReference type="GO" id="GO:0031053">
    <property type="term" value="P:primary miRNA processing"/>
    <property type="evidence" value="ECO:0000304"/>
    <property type="project" value="BHF-UCL"/>
</dbReference>
<dbReference type="GO" id="GO:0003184">
    <property type="term" value="P:pulmonary valve morphogenesis"/>
    <property type="evidence" value="ECO:0000250"/>
    <property type="project" value="BHF-UCL"/>
</dbReference>
<dbReference type="GO" id="GO:0006355">
    <property type="term" value="P:regulation of DNA-templated transcription"/>
    <property type="evidence" value="ECO:0000303"/>
    <property type="project" value="ComplexPortal"/>
</dbReference>
<dbReference type="GO" id="GO:0017015">
    <property type="term" value="P:regulation of transforming growth factor beta receptor signaling pathway"/>
    <property type="evidence" value="ECO:0000315"/>
    <property type="project" value="BHF-UCL"/>
</dbReference>
<dbReference type="GO" id="GO:0070723">
    <property type="term" value="P:response to cholesterol"/>
    <property type="evidence" value="ECO:0000314"/>
    <property type="project" value="BHF-UCL"/>
</dbReference>
<dbReference type="GO" id="GO:0009749">
    <property type="term" value="P:response to glucose"/>
    <property type="evidence" value="ECO:0007669"/>
    <property type="project" value="Ensembl"/>
</dbReference>
<dbReference type="GO" id="GO:0062009">
    <property type="term" value="P:secondary palate development"/>
    <property type="evidence" value="ECO:0000250"/>
    <property type="project" value="BHF-UCL"/>
</dbReference>
<dbReference type="GO" id="GO:0060395">
    <property type="term" value="P:SMAD protein signal transduction"/>
    <property type="evidence" value="ECO:0000314"/>
    <property type="project" value="MGI"/>
</dbReference>
<dbReference type="GO" id="GO:0007179">
    <property type="term" value="P:transforming growth factor beta receptor signaling pathway"/>
    <property type="evidence" value="ECO:0000314"/>
    <property type="project" value="BHF-UCL"/>
</dbReference>
<dbReference type="GO" id="GO:0061450">
    <property type="term" value="P:trophoblast cell migration"/>
    <property type="evidence" value="ECO:0000314"/>
    <property type="project" value="UniProt"/>
</dbReference>
<dbReference type="GO" id="GO:0001657">
    <property type="term" value="P:ureteric bud development"/>
    <property type="evidence" value="ECO:0007669"/>
    <property type="project" value="Ensembl"/>
</dbReference>
<dbReference type="GO" id="GO:0007352">
    <property type="term" value="P:zygotic specification of dorsal/ventral axis"/>
    <property type="evidence" value="ECO:0000315"/>
    <property type="project" value="BHF-UCL"/>
</dbReference>
<dbReference type="CDD" id="cd10491">
    <property type="entry name" value="MH1_SMAD_2_3"/>
    <property type="match status" value="1"/>
</dbReference>
<dbReference type="CDD" id="cd10985">
    <property type="entry name" value="MH2_SMAD_2_3"/>
    <property type="match status" value="1"/>
</dbReference>
<dbReference type="DisProt" id="DP01319"/>
<dbReference type="FunFam" id="2.60.200.10:FF:000001">
    <property type="entry name" value="Mothers against decapentaplegic homolog"/>
    <property type="match status" value="1"/>
</dbReference>
<dbReference type="FunFam" id="3.90.520.10:FF:000007">
    <property type="entry name" value="Mothers against decapentaplegic homolog"/>
    <property type="match status" value="1"/>
</dbReference>
<dbReference type="Gene3D" id="2.60.200.10">
    <property type="match status" value="1"/>
</dbReference>
<dbReference type="Gene3D" id="3.90.520.10">
    <property type="entry name" value="SMAD MH1 domain"/>
    <property type="match status" value="1"/>
</dbReference>
<dbReference type="IDEAL" id="IID00127"/>
<dbReference type="InterPro" id="IPR013790">
    <property type="entry name" value="Dwarfin"/>
</dbReference>
<dbReference type="InterPro" id="IPR003619">
    <property type="entry name" value="MAD_homology1_Dwarfin-type"/>
</dbReference>
<dbReference type="InterPro" id="IPR013019">
    <property type="entry name" value="MAD_homology_MH1"/>
</dbReference>
<dbReference type="InterPro" id="IPR017855">
    <property type="entry name" value="SMAD-like_dom_sf"/>
</dbReference>
<dbReference type="InterPro" id="IPR001132">
    <property type="entry name" value="SMAD_dom_Dwarfin-type"/>
</dbReference>
<dbReference type="InterPro" id="IPR008984">
    <property type="entry name" value="SMAD_FHA_dom_sf"/>
</dbReference>
<dbReference type="InterPro" id="IPR036578">
    <property type="entry name" value="SMAD_MH1_sf"/>
</dbReference>
<dbReference type="PANTHER" id="PTHR13703:SF42">
    <property type="entry name" value="MOTHERS AGAINST DECAPENTAPLEGIC HOMOLOG 2"/>
    <property type="match status" value="1"/>
</dbReference>
<dbReference type="PANTHER" id="PTHR13703">
    <property type="entry name" value="SMAD"/>
    <property type="match status" value="1"/>
</dbReference>
<dbReference type="Pfam" id="PF03165">
    <property type="entry name" value="MH1"/>
    <property type="match status" value="1"/>
</dbReference>
<dbReference type="Pfam" id="PF03166">
    <property type="entry name" value="MH2"/>
    <property type="match status" value="1"/>
</dbReference>
<dbReference type="SMART" id="SM00523">
    <property type="entry name" value="DWA"/>
    <property type="match status" value="1"/>
</dbReference>
<dbReference type="SMART" id="SM00524">
    <property type="entry name" value="DWB"/>
    <property type="match status" value="1"/>
</dbReference>
<dbReference type="SUPFAM" id="SSF56366">
    <property type="entry name" value="SMAD MH1 domain"/>
    <property type="match status" value="1"/>
</dbReference>
<dbReference type="SUPFAM" id="SSF49879">
    <property type="entry name" value="SMAD/FHA domain"/>
    <property type="match status" value="1"/>
</dbReference>
<dbReference type="PROSITE" id="PS51075">
    <property type="entry name" value="MH1"/>
    <property type="match status" value="1"/>
</dbReference>
<dbReference type="PROSITE" id="PS51076">
    <property type="entry name" value="MH2"/>
    <property type="match status" value="1"/>
</dbReference>
<reference key="1">
    <citation type="journal article" date="1996" name="Nat. Genet.">
        <title>Mad-related genes in the human.</title>
        <authorList>
            <person name="Riggins G.J."/>
            <person name="Thiagalingam S."/>
            <person name="Rosenblum E."/>
            <person name="Weinstein C.L."/>
            <person name="Kern S.E."/>
            <person name="Hamilton S.R."/>
            <person name="Willson J.K.V."/>
            <person name="Markowitz S.D."/>
            <person name="Kinzler K.W."/>
            <person name="Vogelstein B.V."/>
        </authorList>
    </citation>
    <scope>NUCLEOTIDE SEQUENCE [MRNA] (ISOFORM LONG)</scope>
    <scope>VARIANT 344-GLU--GLN-358 DEL</scope>
</reference>
<reference key="2">
    <citation type="journal article" date="1996" name="Nature">
        <title>Receptor-associated Mad homologues synergize as effectors of the TGF-beta response.</title>
        <authorList>
            <person name="Zhang Y."/>
            <person name="Feng X.-H."/>
            <person name="Wu R.-Y."/>
            <person name="Derynck R."/>
        </authorList>
    </citation>
    <scope>NUCLEOTIDE SEQUENCE [MRNA] (ISOFORM LONG)</scope>
    <source>
        <tissue>Placenta</tissue>
    </source>
</reference>
<reference key="3">
    <citation type="journal article" date="1996" name="Cell">
        <title>MADR2 maps to 18q21 and encodes a TGFbeta-regulated MAD-related protein that is functionally mutated in colorectal carcinoma.</title>
        <authorList>
            <person name="Eppert K."/>
            <person name="Scherer S.W."/>
            <person name="Ozcelik H."/>
            <person name="Pirone R."/>
            <person name="Hoodless P."/>
            <person name="Kim H."/>
            <person name="Tsui L.-C."/>
            <person name="Bapat B."/>
            <person name="Gallinger S."/>
            <person name="Andrulis I.L."/>
            <person name="Thomsen G.H."/>
            <person name="Wrana J.L."/>
            <person name="Attisano L."/>
        </authorList>
    </citation>
    <scope>NUCLEOTIDE SEQUENCE [MRNA] (ISOFORM LONG)</scope>
    <scope>FUNCTION</scope>
    <scope>PHOSPHORYLATION BY TGFBR1</scope>
    <scope>VARIANTS CYS-133; ARG-440; HIS-445 AND GLU-450</scope>
    <source>
        <tissue>Kidney</tissue>
    </source>
</reference>
<reference key="4">
    <citation type="journal article" date="1997" name="Genes Dev.">
        <title>Dual role of the Smad4/DPC4 tumor suppressor in TGFbeta-inducible transcriptional complexes.</title>
        <authorList>
            <person name="Liu F."/>
            <person name="Pouponnot C."/>
            <person name="Massague J."/>
        </authorList>
    </citation>
    <scope>NUCLEOTIDE SEQUENCE [MRNA] (ISOFORM LONG)</scope>
</reference>
<reference key="5">
    <citation type="journal article" date="1998" name="Genomics">
        <title>Characterization of the MADH2/Smad2 gene, a human Mad homolog responsible for the transforming growth factor-beta and activin signal transduction pathway.</title>
        <authorList>
            <person name="Takenoshita S."/>
            <person name="Mogi A."/>
            <person name="Nagashima M."/>
            <person name="Yang K."/>
            <person name="Yagi K."/>
            <person name="Hanyu A."/>
            <person name="Nagamachi Y."/>
            <person name="Miyazono K."/>
            <person name="Hagiwara K."/>
        </authorList>
    </citation>
    <scope>NUCLEOTIDE SEQUENCE [GENOMIC DNA] (ISOFORMS LONG AND SHORT)</scope>
</reference>
<reference key="6">
    <citation type="journal article" date="2004" name="Genome Res.">
        <title>The status, quality, and expansion of the NIH full-length cDNA project: the Mammalian Gene Collection (MGC).</title>
        <authorList>
            <consortium name="The MGC Project Team"/>
        </authorList>
    </citation>
    <scope>NUCLEOTIDE SEQUENCE [LARGE SCALE MRNA] (ISOFORM LONG)</scope>
    <source>
        <tissue>Kidney</tissue>
        <tissue>Pancreas</tissue>
        <tissue>Spleen</tissue>
    </source>
</reference>
<reference key="7">
    <citation type="submission" date="2008-12" db="UniProtKB">
        <authorList>
            <person name="Bienvenut W.V."/>
            <person name="von Kriegsheim A."/>
            <person name="Kolch W."/>
        </authorList>
    </citation>
    <scope>PROTEIN SEQUENCE OF 2-14 AND 170-182</scope>
    <scope>CLEAVAGE OF INITIATOR METHIONINE</scope>
    <scope>ACETYLATION AT SER-2</scope>
    <scope>IDENTIFICATION BY MASS SPECTROMETRY</scope>
    <source>
        <tissue>Chronic myeloid leukemia cell</tissue>
    </source>
</reference>
<reference key="8">
    <citation type="journal article" date="1996" name="Cell">
        <title>MADR2 is a substrate of the TGFbeta receptor and its phosphorylation is required for nuclear accumulation and signaling.</title>
        <authorList>
            <person name="Macias-Silva M."/>
            <person name="Abdollah S."/>
            <person name="Hoodless P.A."/>
            <person name="Pirone R."/>
            <person name="Attisano L."/>
            <person name="Wrana J.L."/>
        </authorList>
    </citation>
    <scope>INTERACTION WITH TGFBR1</scope>
    <scope>PHOSPHORYLATION AT SER-464; SER-465 AND SER-467</scope>
    <scope>MUTAGENESIS OF SER-464; SER-465 AND SER-467</scope>
</reference>
<reference key="9">
    <citation type="journal article" date="1998" name="Cell">
        <title>SARA, a FYVE domain protein that recruits Smad2 to the TGFbeta receptor.</title>
        <authorList>
            <person name="Tsukazaki T."/>
            <person name="Chiang T.A."/>
            <person name="Davison A.F."/>
            <person name="Attisano L."/>
            <person name="Wrana J.L."/>
        </authorList>
    </citation>
    <scope>INTERACTION WITH ZFYVE9</scope>
    <scope>SUBCELLULAR LOCATION</scope>
</reference>
<reference key="10">
    <citation type="journal article" date="1998" name="EMBO J.">
        <title>Smad proteins exist as monomers in vivo and undergo homo- and hetero-oligomerization upon activation by serine/threonine kinase receptors.</title>
        <authorList>
            <person name="Kawabata M."/>
            <person name="Inoue H."/>
            <person name="Hanyu A."/>
            <person name="Imamura T."/>
            <person name="Miyazono K."/>
        </authorList>
    </citation>
    <scope>SUBUNIT</scope>
    <scope>INTERACTION WITH SMAD4</scope>
</reference>
<reference key="11">
    <citation type="journal article" date="1999" name="J. Biol. Chem.">
        <title>Alternatively spliced variant of Smad2 lacking exon 3. Comparison with wild-type Smad2 and Smad3.</title>
        <authorList>
            <person name="Yagi K."/>
            <person name="Goto D."/>
            <person name="Hamamoto T."/>
            <person name="Takenoshita S."/>
            <person name="Kato M."/>
            <person name="Miyazono K."/>
        </authorList>
    </citation>
    <scope>ALTERNATIVE SPLICING (ISOFORMS LONG AND SHORT)</scope>
</reference>
<reference key="12">
    <citation type="journal article" date="1997" name="Genes Dev.">
        <title>The TGF-beta family mediator Smad1 is phosphorylated directly and activated functionally by the BMP receptor kinase.</title>
        <authorList>
            <person name="Kretzschmar M."/>
            <person name="Liu F."/>
            <person name="Hata A."/>
            <person name="Doody J."/>
            <person name="Massague J."/>
        </authorList>
    </citation>
    <scope>PHOSPHORYLATION AT SER-465 AND SER-467</scope>
</reference>
<reference key="13">
    <citation type="journal article" date="1997" name="J. Biol. Chem.">
        <title>TbetaRI phosphorylation of Smad2 on Ser465 and Ser467 is required for Smad2-Smad4 complex formation and signaling.</title>
        <authorList>
            <person name="Abdollah S."/>
            <person name="Macias-Silva M."/>
            <person name="Tsukazaki T."/>
            <person name="Hayashi H."/>
            <person name="Attisano L."/>
            <person name="Wrana J.L."/>
        </authorList>
    </citation>
    <scope>PHOSPHORYLATION AT SER-465 AND SER-467 BY TGFBR1</scope>
</reference>
<reference key="14">
    <citation type="journal article" date="1998" name="Mol. Cell">
        <title>Characterization of human FAST-1, a TGF beta and activin signal transducer.</title>
        <authorList>
            <person name="Zhou S."/>
            <person name="Zawel L."/>
            <person name="Lengauer C."/>
            <person name="Kinzler K.W."/>
            <person name="Vogelstein B."/>
        </authorList>
    </citation>
    <scope>INTERACTION WITH FOXH1</scope>
    <source>
        <tissue>Colon adenocarcinoma</tissue>
    </source>
</reference>
<reference key="15">
    <citation type="journal article" date="1999" name="Mol. Endocrinol.">
        <title>Roles of pathway-specific and inhibitory Smads in activin receptor signaling.</title>
        <authorList>
            <person name="Lebrun J.J."/>
            <person name="Takabe K."/>
            <person name="Chen Y."/>
            <person name="Vale W."/>
        </authorList>
    </citation>
    <scope>INTERACTION WITH ACVR1B</scope>
    <scope>FUNCTION</scope>
</reference>
<reference key="16">
    <citation type="journal article" date="2000" name="Nat. Genet.">
        <title>Mutations in TGIF cause holoprosencephaly and link NODAL signalling to human neural axis determination.</title>
        <authorList>
            <person name="Gripp K.W."/>
            <person name="Wotton D."/>
            <person name="Edwards M.C."/>
            <person name="Roessler E."/>
            <person name="Ades L."/>
            <person name="Meinecke P."/>
            <person name="Richieri-Costa A."/>
            <person name="Zackai E.H."/>
            <person name="Massague J."/>
            <person name="Muenke M."/>
            <person name="Elledge S.J."/>
        </authorList>
    </citation>
    <scope>INTERACTION WITH TGIF1</scope>
</reference>
<reference key="17">
    <citation type="journal article" date="2001" name="EMBO J.">
        <title>The adaptor molecule Disabled-2 links the transforming growth factor beta receptors to the Smad pathway.</title>
        <authorList>
            <person name="Hocevar B.A."/>
            <person name="Smine A."/>
            <person name="Xu X.X."/>
            <person name="Howe P.H."/>
        </authorList>
    </citation>
    <scope>INTERACTION WITH DAB2</scope>
</reference>
<reference key="18">
    <citation type="journal article" date="2001" name="J. Biol. Chem.">
        <title>Ski-interacting protein interacts with Smad proteins to augment transforming growth factor-beta-dependent transcription.</title>
        <authorList>
            <person name="Leong G.M."/>
            <person name="Subramaniam N."/>
            <person name="Figueroa J."/>
            <person name="Flanagan J.L."/>
            <person name="Hayman M.J."/>
            <person name="Eisman J.A."/>
            <person name="Kouzmenko A.P."/>
        </authorList>
    </citation>
    <scope>INTERACTION WITH SNW1</scope>
</reference>
<reference key="19">
    <citation type="journal article" date="2001" name="Nat. Cell Biol.">
        <title>TGF-beta induces assembly of a Smad2-Smurf2 ubiquitin ligase complex that targets SnoN for degradation.</title>
        <authorList>
            <person name="Bonni S."/>
            <person name="Wang H.R."/>
            <person name="Causing C.G."/>
            <person name="Kavsak P."/>
            <person name="Stroschein S.L."/>
            <person name="Luo K."/>
            <person name="Wrana J.L."/>
        </authorList>
    </citation>
    <scope>INTERACTION WITH SMURF2 AND SNON</scope>
    <scope>MUTAGENESIS OF 221-PRO--TYR-225</scope>
</reference>
<reference key="20">
    <citation type="journal article" date="2002" name="Biochem. J.">
        <title>Decorin suppresses transforming growth factor-beta-induced expression of plasminogen activator inhibitor-1 in human mesangial cells through a mechanism that involves Ca2+-dependent phosphorylation of Smad2 at serine-240.</title>
        <authorList>
            <person name="Abdel-Wahab N."/>
            <person name="Wicks S.J."/>
            <person name="Mason R.M."/>
            <person name="Chantry A."/>
        </authorList>
    </citation>
    <scope>PHOSPHORYLATION AT SER-240</scope>
</reference>
<reference key="21">
    <citation type="journal article" date="2002" name="J. Biol. Chem.">
        <title>Modulation of Smad2-mediated signaling by extracellular signal-regulated kinase.</title>
        <authorList>
            <person name="Funaba M."/>
            <person name="Zimmerman C.M."/>
            <person name="Mathews L.S."/>
        </authorList>
    </citation>
    <scope>PHOSPHORYLATION AT THR-8; THR-220; SER-245; SER-250 AND SER-255</scope>
</reference>
<reference key="22">
    <citation type="journal article" date="2005" name="Hum. Mol. Genet.">
        <title>MAN1, an integral protein of the inner nuclear membrane, binds Smad2 and Smad3 and antagonizes transforming growth factor-beta signaling.</title>
        <authorList>
            <person name="Lin F."/>
            <person name="Morrison J.M."/>
            <person name="Wu W."/>
            <person name="Worman H.J."/>
        </authorList>
    </citation>
    <scope>INTERACTION WITH LEMD3</scope>
</reference>
<reference key="23">
    <citation type="journal article" date="2005" name="J. Biol. Chem.">
        <title>The integral inner nuclear membrane protein MAN1 physically interacts with the R-Smad proteins to repress signaling by the transforming growth factor-{beta} superfamily of cytokines.</title>
        <authorList>
            <person name="Pan D."/>
            <person name="Estevez-Salmeron L.D."/>
            <person name="Stroschein S.L."/>
            <person name="Zhu X."/>
            <person name="He J."/>
            <person name="Zhou S."/>
            <person name="Luo K."/>
        </authorList>
    </citation>
    <scope>INTERACTION WITH LEMD3</scope>
</reference>
<reference key="24">
    <citation type="journal article" date="2005" name="Lab. Invest.">
        <title>Cloning and functional characterization of a new Ski homolog, Fussel-18, specifically expressed in neuronal tissues.</title>
        <authorList>
            <person name="Arndt S."/>
            <person name="Poser I."/>
            <person name="Schubert T."/>
            <person name="Moser M."/>
            <person name="Bosserhoff A.-K."/>
        </authorList>
    </citation>
    <scope>INTERACTION WITH SKOR2</scope>
</reference>
<reference key="25">
    <citation type="journal article" date="2006" name="Cell">
        <title>PPM1A functions as a Smad phosphatase to terminate TGFbeta signaling.</title>
        <authorList>
            <person name="Lin X."/>
            <person name="Duan X."/>
            <person name="Liang Y.Y."/>
            <person name="Su Y."/>
            <person name="Wrighton K.H."/>
            <person name="Long J."/>
            <person name="Hu M."/>
            <person name="Davis C.M."/>
            <person name="Wang J."/>
            <person name="Brunicardi F.C."/>
            <person name="Shi Y."/>
            <person name="Chen Y.G."/>
            <person name="Meng A."/>
            <person name="Feng X.H."/>
        </authorList>
    </citation>
    <scope>INTERACTION WITH PPM1A</scope>
    <scope>DEPHOSPHORYLATION</scope>
    <scope>FUNCTION</scope>
    <scope>SUBCELLULAR LOCATION</scope>
    <scope>MUTAGENESIS OF VAL-398; SER-465 AND SER-467</scope>
</reference>
<reference key="26">
    <citation type="journal article" date="2006" name="Cell">
        <title>Hematopoiesis controlled by distinct TIF1gamma and Smad4 branches of the TGFbeta pathway.</title>
        <authorList>
            <person name="He W."/>
            <person name="Dorn D.C."/>
            <person name="Erdjument-Bromage H."/>
            <person name="Tempst P."/>
            <person name="Moore M.A."/>
            <person name="Massague J."/>
        </authorList>
    </citation>
    <scope>IDENTIFICATION IN A COMPLEX WITH SMAD3 AND TRIM33</scope>
    <scope>INTERACTION WITH TRIM33</scope>
</reference>
<reference key="27">
    <citation type="journal article" date="2006" name="J. Biol. Chem.">
        <title>The DNA binding activities of Smad2 and Smad3 are regulated by coactivator-mediated acetylation.</title>
        <authorList>
            <person name="Simonsson M."/>
            <person name="Kanduri M."/>
            <person name="Gronroos E."/>
            <person name="Heldin C.H."/>
            <person name="Ericsson J."/>
        </authorList>
    </citation>
    <scope>ACETYLATION AT LYS-19</scope>
    <scope>MUTAGENESIS OF LYS-19 AND LYS-20</scope>
</reference>
<reference key="28">
    <citation type="journal article" date="2006" name="Nucleic Acids Res.">
        <title>Potentiation of Smad-mediated transcriptional activation by the RNA-binding protein RBPMS.</title>
        <authorList>
            <person name="Sun Y."/>
            <person name="Ding L."/>
            <person name="Zhang H."/>
            <person name="Han J."/>
            <person name="Yang X."/>
            <person name="Yan J."/>
            <person name="Zhu Y."/>
            <person name="Li J."/>
            <person name="Song H."/>
            <person name="Ye Q."/>
        </authorList>
    </citation>
    <scope>INTERACTION WITH RBPMS</scope>
</reference>
<reference key="29">
    <citation type="journal article" date="2007" name="J. Biol. Chem.">
        <title>3-Phosphoinositide-dependent PDK1 negatively regulates transforming growth factor-beta-induced signaling in a kinase-dependent manner through physical interaction with Smad proteins.</title>
        <authorList>
            <person name="Seong H.A."/>
            <person name="Jung H."/>
            <person name="Kim K.T."/>
            <person name="Ha H."/>
        </authorList>
    </citation>
    <scope>FUNCTION</scope>
    <scope>PHOSPHORYLATION BY PDPK1</scope>
    <scope>INTERACTION WITH PDPK1</scope>
</reference>
<reference key="30">
    <citation type="journal article" date="2007" name="Mol. Cell. Neurosci.">
        <title>Fussel-15, a novel Ski/Sno homolog protein, antagonizes BMP signaling.</title>
        <authorList>
            <person name="Arndt S."/>
            <person name="Poser I."/>
            <person name="Moser M."/>
            <person name="Bosserhoff A.-K."/>
        </authorList>
    </citation>
    <scope>INTERACTION WITH SKOR1</scope>
</reference>
<reference key="31">
    <citation type="journal article" date="2007" name="Oncogene">
        <title>Smad3 is acetylated by p300/CBP to regulate its transactivation activity.</title>
        <authorList>
            <person name="Inoue Y."/>
            <person name="Itoh Y."/>
            <person name="Abe K."/>
            <person name="Okamoto T."/>
            <person name="Daitoku H."/>
            <person name="Fukamizu A."/>
            <person name="Onozaki K."/>
            <person name="Hayashi H."/>
        </authorList>
    </citation>
    <scope>ACETYLATION</scope>
    <scope>FUNCTION</scope>
</reference>
<reference key="32">
    <citation type="journal article" date="2008" name="Mol. Cell">
        <title>Kinase-selective enrichment enables quantitative phosphoproteomics of the kinome across the cell cycle.</title>
        <authorList>
            <person name="Daub H."/>
            <person name="Olsen J.V."/>
            <person name="Bairlein M."/>
            <person name="Gnad F."/>
            <person name="Oppermann F.S."/>
            <person name="Korner R."/>
            <person name="Greff Z."/>
            <person name="Keri G."/>
            <person name="Stemmann O."/>
            <person name="Mann M."/>
        </authorList>
    </citation>
    <scope>PHOSPHORYLATION [LARGE SCALE ANALYSIS] AT THR-8</scope>
    <scope>IDENTIFICATION BY MASS SPECTROMETRY [LARGE SCALE ANALYSIS]</scope>
    <source>
        <tissue>Cervix carcinoma</tissue>
    </source>
</reference>
<reference key="33">
    <citation type="journal article" date="2008" name="Nat. Cell Biol.">
        <title>TAZ controls Smad nucleocytoplasmic shuttling and regulates human embryonic stem-cell self-renewal.</title>
        <authorList>
            <person name="Varelas X."/>
            <person name="Sakuma R."/>
            <person name="Samavarchi-Tehrani P."/>
            <person name="Peerani R."/>
            <person name="Rao B.M."/>
            <person name="Dembowy J."/>
            <person name="Yaffe M.B."/>
            <person name="Zandstra P.W."/>
            <person name="Wrana J.L."/>
        </authorList>
    </citation>
    <scope>INTERACTION WITH WWTR1</scope>
</reference>
<reference key="34">
    <citation type="journal article" date="2008" name="Proc. Natl. Acad. Sci. U.S.A.">
        <title>A quantitative atlas of mitotic phosphorylation.</title>
        <authorList>
            <person name="Dephoure N."/>
            <person name="Zhou C."/>
            <person name="Villen J."/>
            <person name="Beausoleil S.A."/>
            <person name="Bakalarski C.E."/>
            <person name="Elledge S.J."/>
            <person name="Gygi S.P."/>
        </authorList>
    </citation>
    <scope>PHOSPHORYLATION [LARGE SCALE ANALYSIS] AT SER-458</scope>
    <scope>IDENTIFICATION BY MASS SPECTROMETRY [LARGE SCALE ANALYSIS]</scope>
    <source>
        <tissue>Cervix carcinoma</tissue>
    </source>
</reference>
<reference key="35">
    <citation type="journal article" date="2009" name="Anal. Chem.">
        <title>Lys-N and trypsin cover complementary parts of the phosphoproteome in a refined SCX-based approach.</title>
        <authorList>
            <person name="Gauci S."/>
            <person name="Helbig A.O."/>
            <person name="Slijper M."/>
            <person name="Krijgsveld J."/>
            <person name="Heck A.J."/>
            <person name="Mohammed S."/>
        </authorList>
    </citation>
    <scope>ACETYLATION [LARGE SCALE ANALYSIS] AT SER-2</scope>
    <scope>CLEAVAGE OF INITIATOR METHIONINE [LARGE SCALE ANALYSIS]</scope>
    <scope>IDENTIFICATION BY MASS SPECTROMETRY [LARGE SCALE ANALYSIS]</scope>
</reference>
<reference key="36">
    <citation type="journal article" date="2009" name="Dev. Cell">
        <title>Nuclear export of Smad2 and Smad3 by RanBP3 facilitates termination of TGF-beta signaling.</title>
        <authorList>
            <person name="Dai F."/>
            <person name="Lin X."/>
            <person name="Chang C."/>
            <person name="Feng X.H."/>
        </authorList>
    </citation>
    <scope>INTERACTION WITH RANBP3</scope>
    <scope>SUBCELLULAR LOCATION</scope>
    <scope>FUNCTION</scope>
    <scope>MUTAGENESIS OF 465-SER--SER-467</scope>
</reference>
<reference key="37">
    <citation type="journal article" date="2009" name="J. Biol. Chem.">
        <title>SKI and MEL1 cooperate to inhibit transforming growth factor-beta signal in gastric cancer cells.</title>
        <authorList>
            <person name="Takahata M."/>
            <person name="Inoue Y."/>
            <person name="Tsuda H."/>
            <person name="Imoto I."/>
            <person name="Koinuma D."/>
            <person name="Hayashi M."/>
            <person name="Ichikura T."/>
            <person name="Yamori T."/>
            <person name="Nagasaki K."/>
            <person name="Yoshida M."/>
            <person name="Matsuoka M."/>
            <person name="Morishita K."/>
            <person name="Yuki K."/>
            <person name="Hanyu A."/>
            <person name="Miyazawa K."/>
            <person name="Inazawa J."/>
            <person name="Miyazono K."/>
            <person name="Imamura T."/>
        </authorList>
    </citation>
    <scope>INTERACTION WITH PRDM16</scope>
</reference>
<reference key="38">
    <citation type="journal article" date="2010" name="Dev. Cell">
        <title>The Crumbs complex couples cell density sensing to Hippo-dependent control of the TGF-beta-SMAD pathway.</title>
        <authorList>
            <person name="Varelas X."/>
            <person name="Samavarchi-Tehrani P."/>
            <person name="Narimatsu M."/>
            <person name="Weiss A."/>
            <person name="Cockburn K."/>
            <person name="Larsen B.G."/>
            <person name="Rossant J."/>
            <person name="Wrana J.L."/>
        </authorList>
    </citation>
    <scope>SUBCELLULAR LOCATION</scope>
</reference>
<reference key="39">
    <citation type="journal article" date="2010" name="J. Biol. Chem.">
        <title>MTMR4 attenuates transforming growth factor beta (TGFbeta) signaling by dephosphorylating R-Smads in endosomes.</title>
        <authorList>
            <person name="Yu J."/>
            <person name="Pan L."/>
            <person name="Qin X."/>
            <person name="Chen H."/>
            <person name="Xu Y."/>
            <person name="Chen Y."/>
            <person name="Tang H."/>
        </authorList>
    </citation>
    <scope>INTERACTION WITH MTMR4</scope>
</reference>
<reference key="40">
    <citation type="journal article" date="2010" name="Mol. Cell">
        <title>TMEPAI, a transmembrane TGF-beta-inducible protein, sequesters Smad proteins from active participation in TGF-beta signaling.</title>
        <authorList>
            <person name="Watanabe Y."/>
            <person name="Itoh S."/>
            <person name="Goto T."/>
            <person name="Ohnishi E."/>
            <person name="Inamitsu M."/>
            <person name="Itoh F."/>
            <person name="Satoh K."/>
            <person name="Wiercinska E."/>
            <person name="Yang W."/>
            <person name="Shi L."/>
            <person name="Tanaka A."/>
            <person name="Nakano N."/>
            <person name="Mommaas A.M."/>
            <person name="Shibuya H."/>
            <person name="Ten Dijke P."/>
            <person name="Kato M."/>
        </authorList>
    </citation>
    <scope>INTERACTION WITH PMEPA1</scope>
    <scope>MUTAGENESIS OF TRP-368</scope>
</reference>
<reference key="41">
    <citation type="journal article" date="2010" name="Sci. Signal.">
        <title>Quantitative phosphoproteomics reveals widespread full phosphorylation site occupancy during mitosis.</title>
        <authorList>
            <person name="Olsen J.V."/>
            <person name="Vermeulen M."/>
            <person name="Santamaria A."/>
            <person name="Kumar C."/>
            <person name="Miller M.L."/>
            <person name="Jensen L.J."/>
            <person name="Gnad F."/>
            <person name="Cox J."/>
            <person name="Jensen T.S."/>
            <person name="Nigg E.A."/>
            <person name="Brunak S."/>
            <person name="Mann M."/>
        </authorList>
    </citation>
    <scope>ACETYLATION [LARGE SCALE ANALYSIS] AT SER-2</scope>
    <scope>PHOSPHORYLATION [LARGE SCALE ANALYSIS] AT THR-8; SER-458 AND SER-460</scope>
    <scope>CLEAVAGE OF INITIATOR METHIONINE [LARGE SCALE ANALYSIS]</scope>
    <scope>IDENTIFICATION BY MASS SPECTROMETRY [LARGE SCALE ANALYSIS]</scope>
    <source>
        <tissue>Cervix carcinoma</tissue>
    </source>
</reference>
<reference key="42">
    <citation type="journal article" date="2011" name="BMC Syst. Biol.">
        <title>Initial characterization of the human central proteome.</title>
        <authorList>
            <person name="Burkard T.R."/>
            <person name="Planyavsky M."/>
            <person name="Kaupe I."/>
            <person name="Breitwieser F.P."/>
            <person name="Buerckstuemmer T."/>
            <person name="Bennett K.L."/>
            <person name="Superti-Furga G."/>
            <person name="Colinge J."/>
        </authorList>
    </citation>
    <scope>IDENTIFICATION BY MASS SPECTROMETRY [LARGE SCALE ANALYSIS]</scope>
</reference>
<reference key="43">
    <citation type="journal article" date="2011" name="Cell Biol. Int.">
        <title>ZNF580, a novel C2H2 zinc-finger transcription factor, interacts with the TGF-beta signal molecule Smad2.</title>
        <authorList>
            <person name="Luo Y."/>
            <person name="Hu W."/>
            <person name="Xu R."/>
            <person name="Hou B."/>
            <person name="Zhang L."/>
            <person name="Zhang W."/>
        </authorList>
    </citation>
    <scope>INTERACTION WITH ZNF580</scope>
    <scope>SUBCELLULAR LOCATION</scope>
    <scope>TISSUE SPECIFICITY</scope>
</reference>
<reference key="44">
    <citation type="journal article" date="2011" name="Nat. Cell Biol.">
        <title>USP15 is a deubiquitylating enzyme for receptor-activated SMADs.</title>
        <authorList>
            <person name="Inui M."/>
            <person name="Manfrin A."/>
            <person name="Mamidi A."/>
            <person name="Martello G."/>
            <person name="Morsut L."/>
            <person name="Soligo S."/>
            <person name="Enzo E."/>
            <person name="Moro S."/>
            <person name="Polo S."/>
            <person name="Dupont S."/>
            <person name="Cordenonsi M."/>
            <person name="Piccolo S."/>
        </authorList>
    </citation>
    <scope>UBIQUITINATION</scope>
    <scope>DEUBIQUITINATION BY USP15</scope>
    <scope>DNA-BINDING</scope>
    <scope>INTERACTION WITH USP15</scope>
</reference>
<reference key="45">
    <citation type="journal article" date="2012" name="Cell. Signal.">
        <title>Protein phosphatase 5 modulates SMAD3 function in the transforming growth factor-beta pathway.</title>
        <authorList>
            <person name="Bruce D.L."/>
            <person name="Macartney T."/>
            <person name="Yong W."/>
            <person name="Shou W."/>
            <person name="Sapkota G.P."/>
        </authorList>
    </citation>
    <scope>INTERACTION WITH PPP5C</scope>
    <scope>SUBCELLULAR LOCATION</scope>
</reference>
<reference key="46">
    <citation type="journal article" date="2012" name="Mol. Cell. Proteomics">
        <title>Comparative large-scale characterisation of plant vs. mammal proteins reveals similar and idiosyncratic N-alpha acetylation features.</title>
        <authorList>
            <person name="Bienvenut W.V."/>
            <person name="Sumpton D."/>
            <person name="Martinez A."/>
            <person name="Lilla S."/>
            <person name="Espagne C."/>
            <person name="Meinnel T."/>
            <person name="Giglione C."/>
        </authorList>
    </citation>
    <scope>ACETYLATION [LARGE SCALE ANALYSIS] AT SER-2</scope>
    <scope>CLEAVAGE OF INITIATOR METHIONINE [LARGE SCALE ANALYSIS]</scope>
    <scope>IDENTIFICATION BY MASS SPECTROMETRY [LARGE SCALE ANALYSIS]</scope>
</reference>
<reference key="47">
    <citation type="journal article" date="2012" name="Proc. Natl. Acad. Sci. U.S.A.">
        <title>N-terminal acetylome analyses and functional insights of the N-terminal acetyltransferase NatB.</title>
        <authorList>
            <person name="Van Damme P."/>
            <person name="Lasa M."/>
            <person name="Polevoda B."/>
            <person name="Gazquez C."/>
            <person name="Elosegui-Artola A."/>
            <person name="Kim D.S."/>
            <person name="De Juan-Pardo E."/>
            <person name="Demeyer K."/>
            <person name="Hole K."/>
            <person name="Larrea E."/>
            <person name="Timmerman E."/>
            <person name="Prieto J."/>
            <person name="Arnesen T."/>
            <person name="Sherman F."/>
            <person name="Gevaert K."/>
            <person name="Aldabe R."/>
        </authorList>
    </citation>
    <scope>ACETYLATION [LARGE SCALE ANALYSIS] AT SER-2</scope>
    <scope>CLEAVAGE OF INITIATOR METHIONINE [LARGE SCALE ANALYSIS]</scope>
    <scope>IDENTIFICATION BY MASS SPECTROMETRY [LARGE SCALE ANALYSIS]</scope>
</reference>
<reference key="48">
    <citation type="journal article" date="2013" name="J. Proteome Res.">
        <title>Toward a comprehensive characterization of a human cancer cell phosphoproteome.</title>
        <authorList>
            <person name="Zhou H."/>
            <person name="Di Palma S."/>
            <person name="Preisinger C."/>
            <person name="Peng M."/>
            <person name="Polat A.N."/>
            <person name="Heck A.J."/>
            <person name="Mohammed S."/>
        </authorList>
    </citation>
    <scope>PHOSPHORYLATION [LARGE SCALE ANALYSIS] AT THR-8 AND SER-458</scope>
    <scope>IDENTIFICATION BY MASS SPECTROMETRY [LARGE SCALE ANALYSIS]</scope>
    <source>
        <tissue>Cervix carcinoma</tissue>
        <tissue>Erythroleukemia</tissue>
    </source>
</reference>
<reference key="49">
    <citation type="journal article" date="2013" name="Mol. Cell">
        <title>CRL1-FBXO11 promotes Cdt2 ubiquitylation and degradation and regulates Pr-Set7/Set8-mediated cellular migration.</title>
        <authorList>
            <person name="Abbas T."/>
            <person name="Mueller A.C."/>
            <person name="Shibata E."/>
            <person name="Keaton M."/>
            <person name="Rossi M."/>
            <person name="Dutta A."/>
        </authorList>
    </citation>
    <scope>PHOSPHORYLATION AT SER-465 AND SER-467</scope>
</reference>
<reference key="50">
    <citation type="journal article" date="2014" name="J. Biol. Chem.">
        <title>Zinc finger protein 451 is a novel Smad corepressor in transforming growth factor-beta signaling.</title>
        <authorList>
            <person name="Feng Y."/>
            <person name="Wu H."/>
            <person name="Xu Y."/>
            <person name="Zhang Z."/>
            <person name="Liu T."/>
            <person name="Lin X."/>
            <person name="Feng X.H."/>
        </authorList>
    </citation>
    <scope>INTERACTION WITH ZNF451</scope>
    <scope>IDENTIFICATION IN A COMPLEX WITH ZNF451; SMAD3 AND SMAD4</scope>
</reference>
<reference key="51">
    <citation type="journal article" date="2014" name="J. Biol. Chem.">
        <title>C18 ORF1, a novel negative regulator of transforming growth factor-beta signaling.</title>
        <authorList>
            <person name="Nakano N."/>
            <person name="Maeyama K."/>
            <person name="Sakata N."/>
            <person name="Itoh F."/>
            <person name="Akatsu R."/>
            <person name="Nakata M."/>
            <person name="Katsu Y."/>
            <person name="Ikeno S."/>
            <person name="Togawa Y."/>
            <person name="Vo Nguyen T.T."/>
            <person name="Watanabe Y."/>
            <person name="Kato M."/>
            <person name="Itoh S."/>
        </authorList>
    </citation>
    <scope>INTERACTION WITH LDLRAD4</scope>
</reference>
<reference key="52">
    <citation type="journal article" date="1998" name="Annu. Rev. Biochem.">
        <title>TGF-beta signal transduction.</title>
        <authorList>
            <person name="Massague J."/>
        </authorList>
    </citation>
    <scope>REVIEW</scope>
</reference>
<reference key="53">
    <citation type="journal article" date="1999" name="Cytokine Growth Factor Rev.">
        <title>Remarkable versatility of Smad proteins in the nucleus of transforming growth factor-beta activated cells.</title>
        <authorList>
            <person name="Verschueren K."/>
            <person name="Huylebroeck D."/>
        </authorList>
    </citation>
    <scope>REVIEW</scope>
</reference>
<reference key="54">
    <citation type="journal article" date="2000" name="Cytokine Growth Factor Rev.">
        <title>The Smad pathway.</title>
        <authorList>
            <person name="Wrana J.L."/>
            <person name="Attisano L."/>
        </authorList>
    </citation>
    <scope>REVIEW</scope>
</reference>
<reference key="55">
    <citation type="journal article" date="2000" name="Cytokine Growth Factor Rev.">
        <title>TGF-beta signaling by Smad proteins.</title>
        <authorList>
            <person name="Miyazono K."/>
        </authorList>
    </citation>
    <scope>REVIEW</scope>
</reference>
<reference key="56">
    <citation type="journal article" date="2013" name="Nature">
        <title>De novo mutations in histone-modifying genes in congenital heart disease.</title>
        <authorList>
            <person name="Zaidi S."/>
            <person name="Choi M."/>
            <person name="Wakimoto H."/>
            <person name="Ma L."/>
            <person name="Jiang J."/>
            <person name="Overton J.D."/>
            <person name="Romano-Adesman A."/>
            <person name="Bjornson R.D."/>
            <person name="Breitbart R.E."/>
            <person name="Brown K.K."/>
            <person name="Carriero N.J."/>
            <person name="Cheung Y.H."/>
            <person name="Deanfield J."/>
            <person name="DePalma S."/>
            <person name="Fakhro K.A."/>
            <person name="Glessner J."/>
            <person name="Hakonarson H."/>
            <person name="Italia M.J."/>
            <person name="Kaltman J.R."/>
            <person name="Kaski J."/>
            <person name="Kim R."/>
            <person name="Kline J.K."/>
            <person name="Lee T."/>
            <person name="Leipzig J."/>
            <person name="Lopez A."/>
            <person name="Mane S.M."/>
            <person name="Mitchell L.E."/>
            <person name="Newburger J.W."/>
            <person name="Parfenov M."/>
            <person name="Pe'er I."/>
            <person name="Porter G."/>
            <person name="Roberts A.E."/>
            <person name="Sachidanandam R."/>
            <person name="Sanders S.J."/>
            <person name="Seiden H.S."/>
            <person name="State M.W."/>
            <person name="Subramanian S."/>
            <person name="Tikhonova I.R."/>
            <person name="Wang W."/>
            <person name="Warburton D."/>
            <person name="White P.S."/>
            <person name="Williams I.A."/>
            <person name="Zhao H."/>
            <person name="Seidman J.G."/>
            <person name="Brueckner M."/>
            <person name="Chung W.K."/>
            <person name="Gelb B.D."/>
            <person name="Goldmuntz E."/>
            <person name="Seidman C.E."/>
            <person name="Lifton R.P."/>
        </authorList>
    </citation>
    <scope>INVOLVEMENT IN CHTD8</scope>
    <scope>VARIANT CHTD8 CYS-274</scope>
</reference>
<reference key="57">
    <citation type="journal article" date="2014" name="J. Signal Transduct.">
        <title>TGF-beta signaling cooperates with AT motif-binding factor-1 for repression of the alpha -fetoprotein promoter.</title>
        <authorList>
            <person name="Sakata N."/>
            <person name="Kaneko S."/>
            <person name="Ikeno S."/>
            <person name="Miura Y."/>
            <person name="Nakabayashi H."/>
            <person name="Dong X.Y."/>
            <person name="Dong J.T."/>
            <person name="Tamaoki T."/>
            <person name="Nakano N."/>
            <person name="Itoh S."/>
        </authorList>
    </citation>
    <scope>INTERACTION WITH ZFHX3</scope>
</reference>
<reference key="58">
    <citation type="journal article" date="2015" name="Hum. Mutat.">
        <title>SMAD2 Mutations Are Associated with Arterial Aneurysms and Dissections.</title>
        <authorList>
            <person name="Micha D."/>
            <person name="Guo D.C."/>
            <person name="Hilhorst-Hofstee Y."/>
            <person name="van Kooten F."/>
            <person name="Atmaja D."/>
            <person name="Overwater E."/>
            <person name="Cayami F.K."/>
            <person name="Regalado E.S."/>
            <person name="van Uffelen R."/>
            <person name="Venselaar H."/>
            <person name="Faradz S.M."/>
            <person name="Vriend G."/>
            <person name="Weiss M.M."/>
            <person name="Sistermans E.A."/>
            <person name="Maugeri A."/>
            <person name="Milewicz D.M."/>
            <person name="Pals G."/>
            <person name="van Dijk F.S."/>
        </authorList>
    </citation>
    <scope>INVOLVEMENT IN LDS6</scope>
    <scope>VARIANTS LDS6 ARG-388; SER-449 AND ARG-457</scope>
</reference>
<reference key="59">
    <citation type="journal article" date="2000" name="Science">
        <title>Structural basis of Smad2 recognition by the Smad anchor for receptor activation.</title>
        <authorList>
            <person name="Wu G."/>
            <person name="Chen Y.-G."/>
            <person name="Ozdamar B."/>
            <person name="Gyuricza C.A."/>
            <person name="Chong P.A."/>
            <person name="Wrana J.L."/>
            <person name="Massague J."/>
            <person name="Shi Y."/>
        </authorList>
    </citation>
    <scope>X-RAY CRYSTALLOGRAPHY (2.2 ANGSTROMS) OF 261-456 IN COMPLEX WITH ZFYVE9</scope>
    <scope>INTERACTION WITH SARA</scope>
    <scope>MUTAGENESIS OF ASN-381</scope>
</reference>
<reference key="60">
    <citation type="journal article" date="2004" name="Mol. Cell">
        <title>Structural basis of heteromeric smad protein assembly in TGF-beta signaling.</title>
        <authorList>
            <person name="Chacko B.M."/>
            <person name="Qin B.Y."/>
            <person name="Tiwari A."/>
            <person name="Shi G."/>
            <person name="Lam S."/>
            <person name="Hayward L.J."/>
            <person name="De Caestecker M."/>
            <person name="Lin K."/>
        </authorList>
    </citation>
    <scope>X-RAY CRYSTALLOGRAPHY (2.6 ANGSTROMS) OF 270-466 IN COMPLEX WITH SMAD4</scope>
    <scope>SUBUNIT</scope>
</reference>
<reference key="61">
    <citation type="journal article" date="2006" name="Science">
        <title>The consensus coding sequences of human breast and colorectal cancers.</title>
        <authorList>
            <person name="Sjoeblom T."/>
            <person name="Jones S."/>
            <person name="Wood L.D."/>
            <person name="Parsons D.W."/>
            <person name="Lin J."/>
            <person name="Barber T.D."/>
            <person name="Mandelker D."/>
            <person name="Leary R.J."/>
            <person name="Ptak J."/>
            <person name="Silliman N."/>
            <person name="Szabo S."/>
            <person name="Buckhaults P."/>
            <person name="Farrell C."/>
            <person name="Meeh P."/>
            <person name="Markowitz S.D."/>
            <person name="Willis J."/>
            <person name="Dawson D."/>
            <person name="Willson J.K.V."/>
            <person name="Gazdar A.F."/>
            <person name="Hartigan J."/>
            <person name="Wu L."/>
            <person name="Liu C."/>
            <person name="Parmigiani G."/>
            <person name="Park B.H."/>
            <person name="Bachman K.E."/>
            <person name="Papadopoulos N."/>
            <person name="Vogelstein B."/>
            <person name="Kinzler K.W."/>
            <person name="Velculescu V.E."/>
        </authorList>
    </citation>
    <scope>VARIANT [LARGE SCA6LE ANALYSIS] VAL-300</scope>
</reference>
<reference key="62">
    <citation type="journal article" date="2017" name="Clin. Chim. Acta">
        <title>Exome sequencing identified a novel SMAD2 mutation in a Chinese family with early onset aortic aneurysms.</title>
        <authorList>
            <person name="Zhang W."/>
            <person name="Zeng Q."/>
            <person name="Xu Y."/>
            <person name="Ying H."/>
            <person name="Zhou W."/>
            <person name="Cao Q."/>
            <person name="Zhou W."/>
        </authorList>
    </citation>
    <scope>VARIANT LDS6 VAL-278</scope>
</reference>
<reference key="63">
    <citation type="journal article" date="2018" name="Hum. Mutat.">
        <title>Variable cardiovascular phenotypes associated with SMAD2 pathogenic variants.</title>
        <authorList>
            <person name="Granadillo J.L."/>
            <person name="Chung W.K."/>
            <person name="Hecht L."/>
            <person name="Corsten-Janssen N."/>
            <person name="Wegner D."/>
            <person name="Nij Bijvank S.W.A."/>
            <person name="Toler T.L."/>
            <person name="Pineda-Alvarez D.E."/>
            <person name="Douglas G."/>
            <person name="Murphy J.J."/>
            <person name="Shimony J."/>
            <person name="Shinawi M."/>
        </authorList>
    </citation>
    <scope>VARIANTS CHTD8 159-GLU--GLY-457 DEL AND SER-312</scope>
</reference>
<reference key="64">
    <citation type="journal article" date="2019" name="J. Med. Genet.">
        <title>Novel pathogenic SMAD2 variants in five families with arterial aneurysm and dissection: further delineation of the phenotype.</title>
        <authorList>
            <person name="Cannaerts E."/>
            <person name="Kempers M."/>
            <person name="Maugeri A."/>
            <person name="Marcelis C."/>
            <person name="Gardeitchik T."/>
            <person name="Richer J."/>
            <person name="Micha D."/>
            <person name="Beauchesne L."/>
            <person name="Timmermans J."/>
            <person name="Vermeersch P."/>
            <person name="Meyten N."/>
            <person name="Chenier S."/>
            <person name="van de Beek G."/>
            <person name="Peeters N."/>
            <person name="Alaerts M."/>
            <person name="Schepers D."/>
            <person name="Van Laer L."/>
            <person name="Verstraeten A."/>
            <person name="Loeys B."/>
        </authorList>
    </citation>
    <scope>VARIANTS LDS6 THR-361 AND TYR-397</scope>
    <scope>VARIANTS LYS-318 AND LEU-467</scope>
</reference>